<reference key="1">
    <citation type="journal article" date="1991" name="Biochim. Biophys. Acta">
        <title>Molecular cloning of cell adhesion molecule L1 from human nervous tissue: a comparison of the primary sequences of L1 molecules of different origin.</title>
        <authorList>
            <person name="Kobayashi M."/>
            <person name="Miura M."/>
            <person name="Asou H."/>
            <person name="Uyemura K."/>
        </authorList>
    </citation>
    <scope>NUCLEOTIDE SEQUENCE [MRNA] (ISOFORM 1)</scope>
    <source>
        <tissue>Fetal brain</tissue>
    </source>
</reference>
<reference key="2">
    <citation type="journal article" date="1991" name="Genomics">
        <title>Molecular structure and functional testing of human L1CAM: an interspecies comparison.</title>
        <authorList>
            <person name="Hlavin M.L."/>
            <person name="Lemmon V."/>
        </authorList>
    </citation>
    <scope>NUCLEOTIDE SEQUENCE [MRNA] (ISOFORM 1)</scope>
    <source>
        <tissue>Fetal brain</tissue>
    </source>
</reference>
<reference key="3">
    <citation type="journal article" date="1992" name="J. Mol. Neurosci.">
        <title>Variants of human L1 cell adhesion molecule arise through alternate splicing of RNA.</title>
        <authorList>
            <person name="Reid R.A."/>
            <person name="Hemperly J.J."/>
        </authorList>
    </citation>
    <scope>NUCLEOTIDE SEQUENCE [MRNA] (ISOFORM 2)</scope>
</reference>
<reference key="4">
    <citation type="journal article" date="1997" name="Genomics">
        <title>Genomic organization of two novel genes on human Xq28: compact head to head arrangement of IDH gamma and TRAP delta is conserved in rat and mouse.</title>
        <authorList>
            <person name="Brenner V."/>
            <person name="Nyakatura G."/>
            <person name="Rosenthal A."/>
            <person name="Platzer M."/>
        </authorList>
    </citation>
    <scope>NUCLEOTIDE SEQUENCE [GENOMIC DNA]</scope>
</reference>
<reference key="5">
    <citation type="journal article" date="1998" name="Gene">
        <title>The neural cell adhesion molecule L1: genomic organisation and differential splicing is conserved between man and the pufferfish Fugu.</title>
        <authorList>
            <person name="Coutelle O."/>
            <person name="Nyakatura G."/>
            <person name="Taudien S."/>
            <person name="Elgar G."/>
            <person name="Brenner S."/>
            <person name="Platzer M."/>
            <person name="Drescher B."/>
            <person name="Jouet M."/>
            <person name="Kenwrick S."/>
            <person name="Rosenthal A."/>
        </authorList>
    </citation>
    <scope>NUCLEOTIDE SEQUENCE [GENOMIC DNA]</scope>
    <scope>ALTERNATIVE SPLICING</scope>
</reference>
<reference key="6">
    <citation type="submission" date="2007-03" db="EMBL/GenBank/DDBJ databases">
        <authorList>
            <person name="Son Y.S."/>
        </authorList>
    </citation>
    <scope>NUCLEOTIDE SEQUENCE [MRNA] (ISOFORM 3)</scope>
</reference>
<reference key="7">
    <citation type="journal article" date="2005" name="Nature">
        <title>The DNA sequence of the human X chromosome.</title>
        <authorList>
            <person name="Ross M.T."/>
            <person name="Grafham D.V."/>
            <person name="Coffey A.J."/>
            <person name="Scherer S."/>
            <person name="McLay K."/>
            <person name="Muzny D."/>
            <person name="Platzer M."/>
            <person name="Howell G.R."/>
            <person name="Burrows C."/>
            <person name="Bird C.P."/>
            <person name="Frankish A."/>
            <person name="Lovell F.L."/>
            <person name="Howe K.L."/>
            <person name="Ashurst J.L."/>
            <person name="Fulton R.S."/>
            <person name="Sudbrak R."/>
            <person name="Wen G."/>
            <person name="Jones M.C."/>
            <person name="Hurles M.E."/>
            <person name="Andrews T.D."/>
            <person name="Scott C.E."/>
            <person name="Searle S."/>
            <person name="Ramser J."/>
            <person name="Whittaker A."/>
            <person name="Deadman R."/>
            <person name="Carter N.P."/>
            <person name="Hunt S.E."/>
            <person name="Chen R."/>
            <person name="Cree A."/>
            <person name="Gunaratne P."/>
            <person name="Havlak P."/>
            <person name="Hodgson A."/>
            <person name="Metzker M.L."/>
            <person name="Richards S."/>
            <person name="Scott G."/>
            <person name="Steffen D."/>
            <person name="Sodergren E."/>
            <person name="Wheeler D.A."/>
            <person name="Worley K.C."/>
            <person name="Ainscough R."/>
            <person name="Ambrose K.D."/>
            <person name="Ansari-Lari M.A."/>
            <person name="Aradhya S."/>
            <person name="Ashwell R.I."/>
            <person name="Babbage A.K."/>
            <person name="Bagguley C.L."/>
            <person name="Ballabio A."/>
            <person name="Banerjee R."/>
            <person name="Barker G.E."/>
            <person name="Barlow K.F."/>
            <person name="Barrett I.P."/>
            <person name="Bates K.N."/>
            <person name="Beare D.M."/>
            <person name="Beasley H."/>
            <person name="Beasley O."/>
            <person name="Beck A."/>
            <person name="Bethel G."/>
            <person name="Blechschmidt K."/>
            <person name="Brady N."/>
            <person name="Bray-Allen S."/>
            <person name="Bridgeman A.M."/>
            <person name="Brown A.J."/>
            <person name="Brown M.J."/>
            <person name="Bonnin D."/>
            <person name="Bruford E.A."/>
            <person name="Buhay C."/>
            <person name="Burch P."/>
            <person name="Burford D."/>
            <person name="Burgess J."/>
            <person name="Burrill W."/>
            <person name="Burton J."/>
            <person name="Bye J.M."/>
            <person name="Carder C."/>
            <person name="Carrel L."/>
            <person name="Chako J."/>
            <person name="Chapman J.C."/>
            <person name="Chavez D."/>
            <person name="Chen E."/>
            <person name="Chen G."/>
            <person name="Chen Y."/>
            <person name="Chen Z."/>
            <person name="Chinault C."/>
            <person name="Ciccodicola A."/>
            <person name="Clark S.Y."/>
            <person name="Clarke G."/>
            <person name="Clee C.M."/>
            <person name="Clegg S."/>
            <person name="Clerc-Blankenburg K."/>
            <person name="Clifford K."/>
            <person name="Cobley V."/>
            <person name="Cole C.G."/>
            <person name="Conquer J.S."/>
            <person name="Corby N."/>
            <person name="Connor R.E."/>
            <person name="David R."/>
            <person name="Davies J."/>
            <person name="Davis C."/>
            <person name="Davis J."/>
            <person name="Delgado O."/>
            <person name="Deshazo D."/>
            <person name="Dhami P."/>
            <person name="Ding Y."/>
            <person name="Dinh H."/>
            <person name="Dodsworth S."/>
            <person name="Draper H."/>
            <person name="Dugan-Rocha S."/>
            <person name="Dunham A."/>
            <person name="Dunn M."/>
            <person name="Durbin K.J."/>
            <person name="Dutta I."/>
            <person name="Eades T."/>
            <person name="Ellwood M."/>
            <person name="Emery-Cohen A."/>
            <person name="Errington H."/>
            <person name="Evans K.L."/>
            <person name="Faulkner L."/>
            <person name="Francis F."/>
            <person name="Frankland J."/>
            <person name="Fraser A.E."/>
            <person name="Galgoczy P."/>
            <person name="Gilbert J."/>
            <person name="Gill R."/>
            <person name="Gloeckner G."/>
            <person name="Gregory S.G."/>
            <person name="Gribble S."/>
            <person name="Griffiths C."/>
            <person name="Grocock R."/>
            <person name="Gu Y."/>
            <person name="Gwilliam R."/>
            <person name="Hamilton C."/>
            <person name="Hart E.A."/>
            <person name="Hawes A."/>
            <person name="Heath P.D."/>
            <person name="Heitmann K."/>
            <person name="Hennig S."/>
            <person name="Hernandez J."/>
            <person name="Hinzmann B."/>
            <person name="Ho S."/>
            <person name="Hoffs M."/>
            <person name="Howden P.J."/>
            <person name="Huckle E.J."/>
            <person name="Hume J."/>
            <person name="Hunt P.J."/>
            <person name="Hunt A.R."/>
            <person name="Isherwood J."/>
            <person name="Jacob L."/>
            <person name="Johnson D."/>
            <person name="Jones S."/>
            <person name="de Jong P.J."/>
            <person name="Joseph S.S."/>
            <person name="Keenan S."/>
            <person name="Kelly S."/>
            <person name="Kershaw J.K."/>
            <person name="Khan Z."/>
            <person name="Kioschis P."/>
            <person name="Klages S."/>
            <person name="Knights A.J."/>
            <person name="Kosiura A."/>
            <person name="Kovar-Smith C."/>
            <person name="Laird G.K."/>
            <person name="Langford C."/>
            <person name="Lawlor S."/>
            <person name="Leversha M."/>
            <person name="Lewis L."/>
            <person name="Liu W."/>
            <person name="Lloyd C."/>
            <person name="Lloyd D.M."/>
            <person name="Loulseged H."/>
            <person name="Loveland J.E."/>
            <person name="Lovell J.D."/>
            <person name="Lozado R."/>
            <person name="Lu J."/>
            <person name="Lyne R."/>
            <person name="Ma J."/>
            <person name="Maheshwari M."/>
            <person name="Matthews L.H."/>
            <person name="McDowall J."/>
            <person name="McLaren S."/>
            <person name="McMurray A."/>
            <person name="Meidl P."/>
            <person name="Meitinger T."/>
            <person name="Milne S."/>
            <person name="Miner G."/>
            <person name="Mistry S.L."/>
            <person name="Morgan M."/>
            <person name="Morris S."/>
            <person name="Mueller I."/>
            <person name="Mullikin J.C."/>
            <person name="Nguyen N."/>
            <person name="Nordsiek G."/>
            <person name="Nyakatura G."/>
            <person name="O'dell C.N."/>
            <person name="Okwuonu G."/>
            <person name="Palmer S."/>
            <person name="Pandian R."/>
            <person name="Parker D."/>
            <person name="Parrish J."/>
            <person name="Pasternak S."/>
            <person name="Patel D."/>
            <person name="Pearce A.V."/>
            <person name="Pearson D.M."/>
            <person name="Pelan S.E."/>
            <person name="Perez L."/>
            <person name="Porter K.M."/>
            <person name="Ramsey Y."/>
            <person name="Reichwald K."/>
            <person name="Rhodes S."/>
            <person name="Ridler K.A."/>
            <person name="Schlessinger D."/>
            <person name="Schueler M.G."/>
            <person name="Sehra H.K."/>
            <person name="Shaw-Smith C."/>
            <person name="Shen H."/>
            <person name="Sheridan E.M."/>
            <person name="Shownkeen R."/>
            <person name="Skuce C.D."/>
            <person name="Smith M.L."/>
            <person name="Sotheran E.C."/>
            <person name="Steingruber H.E."/>
            <person name="Steward C.A."/>
            <person name="Storey R."/>
            <person name="Swann R.M."/>
            <person name="Swarbreck D."/>
            <person name="Tabor P.E."/>
            <person name="Taudien S."/>
            <person name="Taylor T."/>
            <person name="Teague B."/>
            <person name="Thomas K."/>
            <person name="Thorpe A."/>
            <person name="Timms K."/>
            <person name="Tracey A."/>
            <person name="Trevanion S."/>
            <person name="Tromans A.C."/>
            <person name="d'Urso M."/>
            <person name="Verduzco D."/>
            <person name="Villasana D."/>
            <person name="Waldron L."/>
            <person name="Wall M."/>
            <person name="Wang Q."/>
            <person name="Warren J."/>
            <person name="Warry G.L."/>
            <person name="Wei X."/>
            <person name="West A."/>
            <person name="Whitehead S.L."/>
            <person name="Whiteley M.N."/>
            <person name="Wilkinson J.E."/>
            <person name="Willey D.L."/>
            <person name="Williams G."/>
            <person name="Williams L."/>
            <person name="Williamson A."/>
            <person name="Williamson H."/>
            <person name="Wilming L."/>
            <person name="Woodmansey R.L."/>
            <person name="Wray P.W."/>
            <person name="Yen J."/>
            <person name="Zhang J."/>
            <person name="Zhou J."/>
            <person name="Zoghbi H."/>
            <person name="Zorilla S."/>
            <person name="Buck D."/>
            <person name="Reinhardt R."/>
            <person name="Poustka A."/>
            <person name="Rosenthal A."/>
            <person name="Lehrach H."/>
            <person name="Meindl A."/>
            <person name="Minx P.J."/>
            <person name="Hillier L.W."/>
            <person name="Willard H.F."/>
            <person name="Wilson R.K."/>
            <person name="Waterston R.H."/>
            <person name="Rice C.M."/>
            <person name="Vaudin M."/>
            <person name="Coulson A."/>
            <person name="Nelson D.L."/>
            <person name="Weinstock G."/>
            <person name="Sulston J.E."/>
            <person name="Durbin R.M."/>
            <person name="Hubbard T."/>
            <person name="Gibbs R.A."/>
            <person name="Beck S."/>
            <person name="Rogers J."/>
            <person name="Bentley D.R."/>
        </authorList>
    </citation>
    <scope>NUCLEOTIDE SEQUENCE [LARGE SCALE GENOMIC DNA]</scope>
</reference>
<reference key="8">
    <citation type="submission" date="2005-09" db="EMBL/GenBank/DDBJ databases">
        <authorList>
            <person name="Mural R.J."/>
            <person name="Istrail S."/>
            <person name="Sutton G."/>
            <person name="Florea L."/>
            <person name="Halpern A.L."/>
            <person name="Mobarry C.M."/>
            <person name="Lippert R."/>
            <person name="Walenz B."/>
            <person name="Shatkay H."/>
            <person name="Dew I."/>
            <person name="Miller J.R."/>
            <person name="Flanigan M.J."/>
            <person name="Edwards N.J."/>
            <person name="Bolanos R."/>
            <person name="Fasulo D."/>
            <person name="Halldorsson B.V."/>
            <person name="Hannenhalli S."/>
            <person name="Turner R."/>
            <person name="Yooseph S."/>
            <person name="Lu F."/>
            <person name="Nusskern D.R."/>
            <person name="Shue B.C."/>
            <person name="Zheng X.H."/>
            <person name="Zhong F."/>
            <person name="Delcher A.L."/>
            <person name="Huson D.H."/>
            <person name="Kravitz S.A."/>
            <person name="Mouchard L."/>
            <person name="Reinert K."/>
            <person name="Remington K.A."/>
            <person name="Clark A.G."/>
            <person name="Waterman M.S."/>
            <person name="Eichler E.E."/>
            <person name="Adams M.D."/>
            <person name="Hunkapiller M.W."/>
            <person name="Myers E.W."/>
            <person name="Venter J.C."/>
        </authorList>
    </citation>
    <scope>NUCLEOTIDE SEQUENCE [LARGE SCALE GENOMIC DNA]</scope>
</reference>
<reference key="9">
    <citation type="journal article" date="2004" name="Genome Res.">
        <title>The status, quality, and expansion of the NIH full-length cDNA project: the Mammalian Gene Collection (MGC).</title>
        <authorList>
            <consortium name="The MGC Project Team"/>
        </authorList>
    </citation>
    <scope>NUCLEOTIDE SEQUENCE [LARGE SCALE MRNA] (ISOFORM 1)</scope>
    <source>
        <tissue>Pancreas</tissue>
    </source>
</reference>
<reference key="10">
    <citation type="journal article" date="1988" name="J. Biol. Chem.">
        <title>A human brain glycoprotein related to the mouse cell adhesion molecule L1.</title>
        <authorList>
            <person name="Wolff J.M."/>
            <person name="Frank R."/>
            <person name="Mujoo K."/>
            <person name="Spiro R.C."/>
            <person name="Reisfeld R.A."/>
            <person name="Rathjen F.G."/>
        </authorList>
    </citation>
    <scope>PROTEIN SEQUENCE OF 20-36</scope>
</reference>
<reference key="11">
    <citation type="journal article" date="1990" name="Genomics">
        <title>The gene encoding L1, a neural adhesion molecule of the immunoglobulin family, is located on the X chromosome in mouse and man.</title>
        <authorList>
            <person name="Djabali M."/>
            <person name="Mattei M.-G."/>
            <person name="Nguyen C."/>
            <person name="Roux D."/>
            <person name="Demengeot J."/>
            <person name="Denizot F."/>
            <person name="Moos M."/>
            <person name="Schachner M."/>
            <person name="Goridis C."/>
            <person name="Jordan B.R."/>
        </authorList>
    </citation>
    <scope>NUCLEOTIDE SEQUENCE [MRNA] OF 332-371</scope>
</reference>
<reference key="12">
    <citation type="journal article" date="1991" name="Nucleic Acids Res.">
        <title>PCR walking from microdissection clone M54 identifies three exons from the human gene for the neural cell adhesion molecule L1 (CAM-L1).</title>
        <authorList>
            <person name="Rosenthal A."/>
            <person name="Mackinnon R.N."/>
            <person name="Jones D.S.C."/>
        </authorList>
    </citation>
    <scope>NUCLEOTIDE SEQUENCE [MRNA] OF 353-1176</scope>
    <scope>NUCLEOTIDE SEQUENCE [GENOMIC DNA] OF 1082-1176</scope>
    <source>
        <tissue>Fetal brain</tissue>
    </source>
</reference>
<reference key="13">
    <citation type="journal article" date="1991" name="J. Neurochem.">
        <title>Isolation and sequence of partial cDNA clones of human L1: homology of human and rodent L1 in the cytoplasmic region.</title>
        <authorList>
            <person name="Harper J.R."/>
            <person name="Prince J.T."/>
            <person name="Healy P.A."/>
            <person name="Stuart J.K."/>
            <person name="Nauman S.J."/>
            <person name="Stallcup W.B."/>
        </authorList>
    </citation>
    <scope>NUCLEOTIDE SEQUENCE [MRNA] OF 1030-1257</scope>
</reference>
<reference key="14">
    <citation type="journal article" date="1996" name="J. Neurochem.">
        <title>Casein kinase II phosphorylates the neural cell adhesion molecule L1.</title>
        <authorList>
            <person name="Wong E.V."/>
            <person name="Schaefer A.W."/>
            <person name="Landreth G."/>
            <person name="Lemmon V."/>
        </authorList>
    </citation>
    <scope>PHOSPHORYLATION AT SER-1181</scope>
</reference>
<reference key="15">
    <citation type="journal article" date="2005" name="J. Proteome Res.">
        <title>Human plasma N-glycoproteome analysis by immunoaffinity subtraction, hydrazide chemistry, and mass spectrometry.</title>
        <authorList>
            <person name="Liu T."/>
            <person name="Qian W.-J."/>
            <person name="Gritsenko M.A."/>
            <person name="Camp D.G. II"/>
            <person name="Monroe M.E."/>
            <person name="Moore R.J."/>
            <person name="Smith R.D."/>
        </authorList>
    </citation>
    <scope>GLYCOSYLATION [LARGE SCALE ANALYSIS] AT ASN-671</scope>
    <source>
        <tissue>Plasma</tissue>
    </source>
</reference>
<reference key="16">
    <citation type="journal article" date="2006" name="Cell">
        <title>Global, in vivo, and site-specific phosphorylation dynamics in signaling networks.</title>
        <authorList>
            <person name="Olsen J.V."/>
            <person name="Blagoev B."/>
            <person name="Gnad F."/>
            <person name="Macek B."/>
            <person name="Kumar C."/>
            <person name="Mortensen P."/>
            <person name="Mann M."/>
        </authorList>
    </citation>
    <scope>PHOSPHORYLATION [LARGE SCALE ANALYSIS] AT SER-1163</scope>
    <scope>IDENTIFICATION BY MASS SPECTROMETRY [LARGE SCALE ANALYSIS]</scope>
    <source>
        <tissue>Cervix carcinoma</tissue>
    </source>
</reference>
<reference key="17">
    <citation type="journal article" date="2008" name="Proc. Natl. Acad. Sci. U.S.A.">
        <title>A quantitative atlas of mitotic phosphorylation.</title>
        <authorList>
            <person name="Dephoure N."/>
            <person name="Zhou C."/>
            <person name="Villen J."/>
            <person name="Beausoleil S.A."/>
            <person name="Bakalarski C.E."/>
            <person name="Elledge S.J."/>
            <person name="Gygi S.P."/>
        </authorList>
    </citation>
    <scope>PHOSPHORYLATION [LARGE SCALE ANALYSIS] AT SER-1248</scope>
    <scope>IDENTIFICATION BY MASS SPECTROMETRY [LARGE SCALE ANALYSIS]</scope>
    <source>
        <tissue>Cervix carcinoma</tissue>
    </source>
</reference>
<reference key="18">
    <citation type="journal article" date="2009" name="J. Proteome Res.">
        <title>Glycoproteomics analysis of human liver tissue by combination of multiple enzyme digestion and hydrazide chemistry.</title>
        <authorList>
            <person name="Chen R."/>
            <person name="Jiang X."/>
            <person name="Sun D."/>
            <person name="Han G."/>
            <person name="Wang F."/>
            <person name="Ye M."/>
            <person name="Wang L."/>
            <person name="Zou H."/>
        </authorList>
    </citation>
    <scope>GLYCOSYLATION [LARGE SCALE ANALYSIS] AT ASN-671</scope>
    <source>
        <tissue>Liver</tissue>
    </source>
</reference>
<reference key="19">
    <citation type="journal article" date="2010" name="J. Med. Genet.">
        <title>Genotype-phenotype correlations in L1 syndrome: a guide for genetic counselling and mutation analysis.</title>
        <authorList>
            <person name="Vos Y.J."/>
            <person name="de Walle H.E."/>
            <person name="Bos K.K."/>
            <person name="Stegeman J.A."/>
            <person name="Ten Berge A.M."/>
            <person name="Bruining M."/>
            <person name="van Maarle M.C."/>
            <person name="Elting M.W."/>
            <person name="den Hollander N.S."/>
            <person name="Hamel B."/>
            <person name="Fortuna A.M."/>
            <person name="Sunde L.E."/>
            <person name="Stolte-Dijkstra I."/>
            <person name="Schrander-Stumpel C.T."/>
            <person name="Hofstra R.M."/>
        </authorList>
    </citation>
    <scope>INVOLVEMENT IN L1 SYNDROME</scope>
    <scope>VARIANTS 26-TYR--GLU-1257 DEL; ASN-37; MET-38; 66-GLN--GLU-1257 DEL; 109-GLN--GLU-1257 DEL; 133-GLU--GLU-1257 DEL; 138-TRP--GLU-1257 DEL; ILE-172; GLY-184; 187-MET--VAL-198 DEL; ASP-254; ARG-276; PRO-313; 366-TRP--GLU-1257 DEL; LYS-369; 423-GLN--GLU-1257 DEL; ARG-480; ASN-516; TYR-516; HIS-525; MET-627; PRO-645; 662-TRP--GLU-1257 DEL; SER-714; ARG-754; 760-ARG--GLU-1257 DEL; 789-GLN--GLU-1257 DEL; 811-TYR--GLU-1257 DEL; 891-TYR--GLU-1257 DEL; 901-ARG--GLU-1257 DEL; 1064-SER--GLU-1257 DEL; ASN-1071 DEL AND GLN-1080</scope>
    <scope>VARIANTS MASA SER-179; TYR-202; ARG-335 AND MET-752</scope>
    <scope>VARIANTS HYCX SER-179; GLN-184; ARG-335; PRO-415 AND MET-752</scope>
</reference>
<reference key="20">
    <citation type="journal article" date="2010" name="Sci. Signal.">
        <title>Quantitative phosphoproteomics reveals widespread full phosphorylation site occupancy during mitosis.</title>
        <authorList>
            <person name="Olsen J.V."/>
            <person name="Vermeulen M."/>
            <person name="Santamaria A."/>
            <person name="Kumar C."/>
            <person name="Miller M.L."/>
            <person name="Jensen L.J."/>
            <person name="Gnad F."/>
            <person name="Cox J."/>
            <person name="Jensen T.S."/>
            <person name="Nigg E.A."/>
            <person name="Brunak S."/>
            <person name="Mann M."/>
        </authorList>
    </citation>
    <scope>PHOSPHORYLATION [LARGE SCALE ANALYSIS] AT SER-1194</scope>
    <scope>PHOSPHORYLATION [LARGE SCALE ANALYSIS] AT SER-1177 (ISOFORM 2)</scope>
    <scope>PHOSPHORYLATION [LARGE SCALE ANALYSIS] AT SER-1172 (ISOFORM 3)</scope>
    <scope>IDENTIFICATION BY MASS SPECTROMETRY [LARGE SCALE ANALYSIS]</scope>
    <source>
        <tissue>Cervix carcinoma</tissue>
    </source>
</reference>
<reference key="21">
    <citation type="journal article" date="2011" name="BMC Syst. Biol.">
        <title>Initial characterization of the human central proteome.</title>
        <authorList>
            <person name="Burkard T.R."/>
            <person name="Planyavsky M."/>
            <person name="Kaupe I."/>
            <person name="Breitwieser F.P."/>
            <person name="Buerckstuemmer T."/>
            <person name="Bennett K.L."/>
            <person name="Superti-Furga G."/>
            <person name="Colinge J."/>
        </authorList>
    </citation>
    <scope>IDENTIFICATION BY MASS SPECTROMETRY [LARGE SCALE ANALYSIS]</scope>
</reference>
<reference key="22">
    <citation type="journal article" date="2011" name="Sci. Signal.">
        <title>System-wide temporal characterization of the proteome and phosphoproteome of human embryonic stem cell differentiation.</title>
        <authorList>
            <person name="Rigbolt K.T."/>
            <person name="Prokhorova T.A."/>
            <person name="Akimov V."/>
            <person name="Henningsen J."/>
            <person name="Johansen P.T."/>
            <person name="Kratchmarova I."/>
            <person name="Kassem M."/>
            <person name="Mann M."/>
            <person name="Olsen J.V."/>
            <person name="Blagoev B."/>
        </authorList>
    </citation>
    <scope>PHOSPHORYLATION [LARGE SCALE ANALYSIS] AT SER-1177 (ISOFORM 2)</scope>
    <scope>PHOSPHORYLATION [LARGE SCALE ANALYSIS] AT SER-1172 (ISOFORM 3)</scope>
    <scope>IDENTIFICATION BY MASS SPECTROMETRY [LARGE SCALE ANALYSIS]</scope>
</reference>
<reference key="23">
    <citation type="journal article" date="2012" name="Neurogenetics">
        <title>Pathomechanistic characterization of two exonic L1CAM variants located in trans in an obligate carrier of X-linked hydrocephalus.</title>
        <authorList>
            <person name="Marx M."/>
            <person name="Diestel S."/>
            <person name="Bozon M."/>
            <person name="Keglowich L."/>
            <person name="Drouot N."/>
            <person name="Bouche E."/>
            <person name="Frebourg T."/>
            <person name="Minz M."/>
            <person name="Saugier-Veber P."/>
            <person name="Castellani V."/>
            <person name="Schaefer M.K."/>
        </authorList>
    </citation>
    <scope>INVOLVEMENT IN L1 SYNDROME</scope>
    <scope>VARIANTS CYS-635 AND ILE-768</scope>
    <scope>GLYCOSYLATION</scope>
</reference>
<reference key="24">
    <citation type="journal article" date="2013" name="J. Proteome Res.">
        <title>Toward a comprehensive characterization of a human cancer cell phosphoproteome.</title>
        <authorList>
            <person name="Zhou H."/>
            <person name="Di Palma S."/>
            <person name="Preisinger C."/>
            <person name="Peng M."/>
            <person name="Polat A.N."/>
            <person name="Heck A.J."/>
            <person name="Mohammed S."/>
        </authorList>
    </citation>
    <scope>PHOSPHORYLATION [LARGE SCALE ANALYSIS] AT SER-1243</scope>
    <scope>IDENTIFICATION BY MASS SPECTROMETRY [LARGE SCALE ANALYSIS]</scope>
    <source>
        <tissue>Cervix carcinoma</tissue>
    </source>
</reference>
<reference key="25">
    <citation type="journal article" date="1993" name="Nat. Genet.">
        <title>A missense mutation confirms the L1 defect in X-linked hydrocephalus (HSAS).</title>
        <authorList>
            <person name="Jouet M."/>
            <person name="Rosenthal A."/>
            <person name="Macfarlane J."/>
            <person name="Kenwrick S."/>
            <person name="Donnai D."/>
        </authorList>
    </citation>
    <scope>VARIANT HYCX TYR-264</scope>
</reference>
<reference key="26">
    <citation type="journal article" date="1994" name="Hum. Mol. Genet.">
        <title>X-linked hydrocephalus and MASA syndrome present in one family are due to a single missense mutation in exon 28 of the L1CAM gene.</title>
        <authorList>
            <person name="Fransen E."/>
            <person name="Schrander-Stumpel C."/>
            <person name="Vits L."/>
            <person name="Coucke P."/>
            <person name="van Camp G."/>
            <person name="Willems P.J."/>
        </authorList>
    </citation>
    <scope>VARIANT HYCX LEU-1194</scope>
    <scope>VARIANT MASA LEU-1194</scope>
</reference>
<reference key="27">
    <citation type="journal article" date="1994" name="Nat. Genet.">
        <title>X-linked spastic paraplegia (SPG1), MASA syndrome and X-linked hydrocephalus result from mutations in the L1 gene.</title>
        <authorList>
            <person name="Jouet M."/>
            <person name="Rosenthal A."/>
            <person name="Armstrong G."/>
            <person name="Macfarlane J."/>
            <person name="Stevenson R."/>
            <person name="Paterson J."/>
            <person name="Metzenberg A."/>
            <person name="Ionasescu V."/>
            <person name="Temple K."/>
            <person name="Kenwrick S."/>
        </authorList>
    </citation>
    <scope>INVOLVEMENT IN MASA</scope>
    <scope>INVOLVEMENT IN HYCX</scope>
    <scope>VARIANTS HYCX GLN-184 AND ARG-452</scope>
    <scope>VARIANT MASA GLN-210</scope>
</reference>
<reference key="28">
    <citation type="journal article" date="1994" name="Nat. Genet.">
        <title>MASA syndrome is due to mutations in the neural cell adhesion gene L1CAM.</title>
        <authorList>
            <person name="Vits L."/>
            <person name="van Camp G."/>
            <person name="Coucke P."/>
            <person name="Fransen E."/>
            <person name="de Boulle K."/>
            <person name="Reyniers E."/>
            <person name="Korn B."/>
            <person name="Poustka A."/>
            <person name="Wilson G."/>
            <person name="Schrander-Stumpel C."/>
            <person name="Winter R.M."/>
            <person name="Schwartz C."/>
            <person name="Willems P.J."/>
        </authorList>
    </citation>
    <scope>VARIANTS MASA GLN-210 AND ASN-598</scope>
</reference>
<reference key="29">
    <citation type="journal article" date="1995" name="Am. J. Hum. Genet.">
        <title>New domains of neural cell-adhesion molecule L1 implicated in X-linked hydrocephalus and MASA syndrome.</title>
        <authorList>
            <person name="Jouet M."/>
            <person name="Moncla A."/>
            <person name="Paterson J."/>
            <person name="McKeown C."/>
            <person name="Fryer A."/>
            <person name="Carpenter N."/>
            <person name="Holmberg E."/>
            <person name="Wadelius C."/>
            <person name="Kenwrick S."/>
        </authorList>
    </citation>
    <scope>VARIANTS MASA LYS-309 AND LEU-941</scope>
    <scope>VARIANTS HYCX SER-9; SER-121; PHE-768; LEU-941 AND CYS-1070</scope>
</reference>
<reference key="30">
    <citation type="journal article" date="1995" name="Eur. J. Hum. Genet.">
        <title>CRASH syndrome: clinical spectrum of corpus callosum hypoplasia, retardation, adducted thumbs, spastic paraparesis and hydrocephalus due to mutations in one single gene, L1.</title>
        <authorList>
            <person name="Fransen E."/>
            <person name="Lemmon V."/>
            <person name="van Camp G."/>
            <person name="Vits L."/>
            <person name="Coucke P."/>
            <person name="Willems P.J."/>
        </authorList>
    </citation>
    <scope>VARIANTS HYCX GLN-184; TYR-264; ARG-452 AND LEU-1194</scope>
    <scope>VARIANTS MASA GLN-210; ASN-598 AND LEU-1194</scope>
</reference>
<reference key="31">
    <citation type="journal article" date="1996" name="Eur. J. Hum. Genet.">
        <authorList>
            <person name="Fransen E."/>
            <person name="Lemmon V."/>
            <person name="van Camp G."/>
            <person name="Vits L."/>
            <person name="Coucke P."/>
            <person name="Willems P.J."/>
        </authorList>
    </citation>
    <scope>ERRATUM OF PUBMED:8556302</scope>
</reference>
<reference key="32">
    <citation type="journal article" date="1995" name="J. Med. Genet.">
        <title>Mutations in L1-CAM in two families with X linked complicated spastic paraplegia, MASA syndrome, and HSAS.</title>
        <authorList>
            <person name="Ruiz J.C."/>
            <person name="Cuppens H."/>
            <person name="Legius E."/>
            <person name="Fryns J.-P."/>
            <person name="Glover T."/>
            <person name="Marynen P."/>
            <person name="Cassiman J.-J."/>
        </authorList>
    </citation>
    <scope>INVOLVEMENT IN MASA</scope>
    <scope>INVOLVEMENT IN HYCX</scope>
    <scope>VARIANTS HYCX SER-179 AND ARG-370</scope>
    <scope>VARIANTS MASA SER-179 AND ARG-370</scope>
</reference>
<reference key="33">
    <citation type="journal article" date="1996" name="Childs Nerv. Syst.">
        <title>A new mutation of the L1CAM gene in an X-linked hydrocephalus family.</title>
        <authorList>
            <person name="Izumoto S."/>
            <person name="Yamasaki M."/>
            <person name="Arita N."/>
            <person name="Hiraga S."/>
            <person name="Ohnishi T."/>
            <person name="Fujitani K."/>
            <person name="Sakoda S."/>
            <person name="Hayakawa T."/>
        </authorList>
    </citation>
    <scope>VARIANT HYCX GLU-655</scope>
</reference>
<reference key="34">
    <citation type="journal article" date="1996" name="J. Med. Genet.">
        <title>Five novel mutations in the L1CAM gene in families with X linked hydrocephalus.</title>
        <authorList>
            <person name="Gu S.-M."/>
            <person name="Orth U."/>
            <person name="Veske A."/>
            <person name="Enders H."/>
            <person name="Kluender K."/>
            <person name="Schloesser M."/>
            <person name="Engel W."/>
            <person name="Schwinger E."/>
            <person name="Gal A."/>
        </authorList>
    </citation>
    <scope>VARIANTS HYCX CYS-194 AND LEU-240</scope>
</reference>
<reference key="35">
    <citation type="journal article" date="1997" name="Am. J. Med. Genet.">
        <title>Molecular analysis of the L1CAM gene in patients with X-linked hydrocephalus demonstrates eight novel mutations and suggests non-allelic heterogeneity of the trait.</title>
        <authorList>
            <person name="Gu S.-M."/>
            <person name="Orth U."/>
            <person name="Zankl M."/>
            <person name="Schroeder J."/>
            <person name="Gal A."/>
        </authorList>
    </citation>
    <scope>VARIANT MASA PRO-482</scope>
    <scope>VARIANTS HYCX SER-526 DEL; PRO-542 AND THR-741</scope>
    <scope>VARIANT HYCX/MASA MET-752</scope>
    <scope>VARIANT ILE-768</scope>
</reference>
<reference key="36">
    <citation type="journal article" date="1997" name="Hum. Mol. Genet.">
        <title>L1-associated diseases: clinical geneticists divide, molecular geneticists unite.</title>
        <authorList>
            <person name="Fransen E."/>
            <person name="Van Camp G."/>
            <person name="Vits L."/>
            <person name="Willems P.J."/>
        </authorList>
    </citation>
    <scope>VARIANTS MASA ASP-268 AND ASP-426</scope>
</reference>
<reference key="37">
    <citation type="journal article" date="1997" name="Hum. Mutat.">
        <title>Nine novel L1 CAM mutations in families with X-linked hydrocephalus.</title>
        <authorList>
            <person name="Macfarlane J.R."/>
            <person name="Du J.-S."/>
            <person name="Pepys M.E."/>
            <person name="Ramsden S."/>
            <person name="Donnai D."/>
            <person name="Charlton R."/>
            <person name="Garrett C."/>
            <person name="Tolmie J."/>
            <person name="Yates J.R.W."/>
            <person name="Berry C."/>
            <person name="Goudie D."/>
            <person name="Moncla A."/>
            <person name="Lunt P."/>
            <person name="Hodgson S."/>
            <person name="Jouet M."/>
            <person name="Kenwrick S."/>
        </authorList>
    </citation>
    <scope>VARIANTS HYCX GLN-184; 439-VAL--THR-443 DEL; CYS-784 AND 936-LEU--LEU-948 DEL</scope>
</reference>
<reference key="38">
    <citation type="journal article" date="1998" name="Hum. Mutat.">
        <title>Multiple exon screening using restriction endonuclease fingerprinting (REF): detection of six novel mutations in the L1 cell adhesion molecule (L1CAM) gene.</title>
        <authorList>
            <person name="Du Y.-Z."/>
            <person name="Srivastava A.K."/>
            <person name="Schwartz C.E."/>
        </authorList>
    </citation>
    <scope>VARIANTS MASA ASP-691 AND ARG-698</scope>
    <scope>VARIANTS HYCX ARG-698 AND PRO-935</scope>
</reference>
<reference key="39">
    <citation type="journal article" date="1998" name="Hum. Mutat. Suppl.">
        <title>Evidence for somatic and germline mosaicism in CRASH syndrome.</title>
        <authorList>
            <person name="Vits L."/>
            <person name="Chitayat D."/>
            <person name="van Camp G."/>
            <person name="Holden J.J.A."/>
            <person name="Fransen E."/>
            <person name="Willems P.J."/>
        </authorList>
    </citation>
    <scope>VARIANT MASA PRO-632</scope>
</reference>
<reference key="40">
    <citation type="journal article" date="1998" name="Hum. Mutat.">
        <title>Identification of novel L1CAM mutations using fluorescence-assisted mismatch analysis.</title>
        <authorList>
            <person name="Saugier-Veber P."/>
            <person name="Martin C."/>
            <person name="le Meur N."/>
            <person name="Lyonnet S."/>
            <person name="Munnich A."/>
            <person name="David A."/>
            <person name="Henocq A."/>
            <person name="Heron D."/>
            <person name="Jonveaux P."/>
            <person name="Odent S."/>
            <person name="Manouvrier S."/>
            <person name="Moncla A."/>
            <person name="Morichon N."/>
            <person name="Philip N."/>
            <person name="Satge D."/>
            <person name="Tosi M."/>
            <person name="Frebourg T."/>
        </authorList>
    </citation>
    <scope>VARIANTS MASA ARG-335 AND CYS-473</scope>
    <scope>VARIANTS HYCX THR-219; ARG-335; CYS-386; CYS-473 AND LEU-1224</scope>
</reference>
<reference key="41">
    <citation type="journal article" date="1998" name="J. Med. Genet.">
        <title>The site of a missense mutation in the extracellular Ig or FN domains of L1CAM influences infant mortality and the severity of X linked hydrocephalus.</title>
        <authorList>
            <person name="Michaelis R.C."/>
            <person name="Du Y.-Z."/>
            <person name="Schwartz C.E."/>
        </authorList>
    </citation>
    <scope>VARIANTS HYCX CYS-674; ASP-691 AND ARG-698</scope>
</reference>
<reference key="42">
    <citation type="journal article" date="2000" name="Am. J. Med. Genet.">
        <title>Spectrum and detection rate of L1CAM mutations in isolated and familial cases with clinically suspected L1-disease.</title>
        <authorList>
            <person name="Finckh U."/>
            <person name="Schroeder J."/>
            <person name="Ressler B."/>
            <person name="Veske A."/>
            <person name="Gal A."/>
        </authorList>
    </citation>
    <scope>VARIANTS HYCX TRP-184; CYS-335; ILE-408; ASP-421; TYR-497; THR-691 AND PRO-751</scope>
    <scope>VARIANTS ASN-30; TRP-739 AND GLU-1239</scope>
    <scope>VARIANT HYCX/MASA ARG-370</scope>
</reference>
<reference key="43">
    <citation type="journal article" date="2000" name="J. Child Neurol.">
        <title>Novel missense mutation in the L1 gene in a child with corpus callosum agenesis, retardation, adducted thumbs, spastic paraparesis, and hydrocephalus.</title>
        <authorList>
            <person name="Sztriha L."/>
            <person name="Frossard P."/>
            <person name="Hofstra R.M."/>
            <person name="Verlind E."/>
            <person name="Nork M."/>
        </authorList>
    </citation>
    <scope>VARIANT MASA TYR-202</scope>
</reference>
<reference key="44">
    <citation type="journal article" date="2002" name="Am. J. Med. Genet.">
        <title>Hydrocephalus and intestinal aganglionosis: is L1CAM a modifier gene in Hirschsprung disease?</title>
        <authorList>
            <person name="Parisi M.A."/>
            <person name="Kapur R.P."/>
            <person name="Neilson I."/>
            <person name="Hofstra R.M.W."/>
            <person name="Holloway L.W."/>
            <person name="Michaelis R.C."/>
            <person name="Leppig K.A."/>
        </authorList>
    </citation>
    <scope>VARIANT HYCX/MASA MET-752</scope>
    <scope>POSSIBLE INVOLVEMENT IN HIRSCHSPRUNG DISEASE</scope>
</reference>
<reference key="45">
    <citation type="journal article" date="2002" name="Pediatr. Neurol.">
        <title>X-linked hydrocephalus: a novel missense mutation in the L1CAM gene.</title>
        <authorList>
            <person name="Sztriha L."/>
            <person name="Vos Y.J."/>
            <person name="Verlind E."/>
            <person name="Johansen J."/>
            <person name="Berg B."/>
        </authorList>
    </citation>
    <scope>VARIANT HYCX PRO-415</scope>
</reference>
<reference key="46">
    <citation type="journal article" date="2003" name="J. Neurosci.">
        <title>The C264Y missense mutation in the extracellular domain of L1 impairs protein trafficking in vitro and in vivo.</title>
        <authorList>
            <person name="Ruenker A.E."/>
            <person name="Bartsch U."/>
            <person name="Nave K.A."/>
            <person name="Schachner M."/>
        </authorList>
    </citation>
    <scope>CHARACTERIZATION OF VARIANT HYCX TYR-264</scope>
    <scope>SUBCELLULAR LOCATION</scope>
    <scope>GLYCOSYLATION</scope>
</reference>
<reference key="47">
    <citation type="journal article" date="2006" name="Clin. Genet.">
        <title>Expanding the phenotypic spectrum of L1CAM-associated disease.</title>
        <authorList>
            <person name="Basel-Vanagaite L."/>
            <person name="Straussberg R."/>
            <person name="Friez M.J."/>
            <person name="Inbar D."/>
            <person name="Korenreich L."/>
            <person name="Shohat M."/>
            <person name="Schwartz C.E."/>
        </authorList>
    </citation>
    <scope>VARIANT ACCPX LEU-240</scope>
</reference>
<reference key="48">
    <citation type="journal article" date="2006" name="Neurol. Sci.">
        <title>A novel missense mutation in the L1CAM gene in a boy with L1 disease.</title>
        <authorList>
            <person name="Simonati A."/>
            <person name="Boaretto F."/>
            <person name="Vettori A."/>
            <person name="Dabrilli P."/>
            <person name="Criscuolo L."/>
            <person name="Rizzuto N."/>
            <person name="Mostacciuolo M.L."/>
        </authorList>
    </citation>
    <scope>VARIANT MASA ASN-770</scope>
</reference>
<reference key="49">
    <citation type="journal article" date="2010" name="Neurobiol. Dis.">
        <title>L1 syndrome mutations impair neuronal L1 function at different levels by divergent mechanisms.</title>
        <authorList>
            <person name="Schaefer M.K."/>
            <person name="Nam Y.C."/>
            <person name="Moumen A."/>
            <person name="Keglowich L."/>
            <person name="Bouche E."/>
            <person name="Kueffner M."/>
            <person name="Bock H.H."/>
            <person name="Rathjen F.G."/>
            <person name="Raoul C."/>
            <person name="Frotscher M."/>
        </authorList>
    </citation>
    <scope>CHARACTERIZATION OF VARIANTS HYCX GLN-184 AND LEU-1036</scope>
    <scope>FUNCTION</scope>
    <scope>SUBCELLULAR LOCATION</scope>
</reference>
<reference key="50">
    <citation type="journal article" date="2012" name="Am. J. Med. Genet. A">
        <title>Association of X-linked hydrocephalus and Hirschsprung disease: Report of a new patient with a mutation in the L1CAM gene.</title>
        <authorList>
            <person name="Fernandez R.M."/>
            <person name="Nunez-Torres R."/>
            <person name="Garcia-Diaz L."/>
            <person name="de Agustin J.C."/>
            <person name="Antinolo G."/>
            <person name="Borrego S."/>
        </authorList>
    </citation>
    <scope>VARIANT HYCX ARG-698</scope>
</reference>
<reference key="51">
    <citation type="journal article" date="2013" name="J. Neurochem.">
        <title>L1CAM and its cell-surface mutants: new mechanisms and effects relevant to the physiology and pathology of neural cells.</title>
        <authorList>
            <person name="Tagliavacca L."/>
            <person name="Colombo F."/>
            <person name="Racchetti G."/>
            <person name="Meldolesi J."/>
        </authorList>
    </citation>
    <scope>CHARACTERIZATION OF VARIANTS MASA GLN-210 AND LYS-309</scope>
    <scope>CHARACTERIZATION OF VARIANTS HYCX THR-219 AND CYS-264</scope>
    <scope>CHARACTERIZATION OF VARIANT HYCX/MASA LEU-941</scope>
    <scope>SUBCELLULAR LOCATION</scope>
</reference>
<reference key="52">
    <citation type="journal article" date="2013" name="PLoS ONE">
        <title>Differential effects of human L1CAM mutations on complementing guidance and synaptic defects in Drosophila melanogaster.</title>
        <authorList>
            <person name="Kudumala S."/>
            <person name="Freund J."/>
            <person name="Hortsch M."/>
            <person name="Godenschwege T.A."/>
        </authorList>
    </citation>
    <scope>CHARACTERIZATION OF VARIANT VAL-120</scope>
    <scope>CHARACTERIZATION OF VARIANTS MASA GLN-210 AND LYS-309</scope>
    <scope>CHARACTERIZATION OF VARIANTS HYCX GLN-184; TYR-264 AND CYS-1070</scope>
    <scope>MUTAGENESIS OF 1147-LYS--VAL-1153</scope>
</reference>
<reference key="53">
    <citation type="journal article" date="2017" name="Clin. Genet.">
        <title>L1 syndrome diagnosis complemented with functional analysis of L1CAM variants located to the two N-terminal Ig-like domains.</title>
        <authorList>
            <person name="Christaller W.A."/>
            <person name="Vos Y."/>
            <person name="Gebre-Medhin S."/>
            <person name="Hofstra R.M."/>
            <person name="Schaefer M.K."/>
        </authorList>
    </citation>
    <scope>VARIANT 789-GLN--GLU-1257 DEL</scope>
    <scope>CHARACTERIZATION OF VARIANTS ASN-37; MET-38 AND ILE-172</scope>
    <scope>CHARACTERIZATION OF VARIANT MASA TYR-202</scope>
    <scope>SUBCELLULAR LOCATION</scope>
</reference>
<evidence type="ECO:0000250" key="1">
    <source>
        <dbReference type="UniProtKB" id="P11627"/>
    </source>
</evidence>
<evidence type="ECO:0000250" key="2">
    <source>
        <dbReference type="UniProtKB" id="Q05695"/>
    </source>
</evidence>
<evidence type="ECO:0000255" key="3"/>
<evidence type="ECO:0000255" key="4">
    <source>
        <dbReference type="PROSITE-ProRule" id="PRU00114"/>
    </source>
</evidence>
<evidence type="ECO:0000255" key="5">
    <source>
        <dbReference type="PROSITE-ProRule" id="PRU00316"/>
    </source>
</evidence>
<evidence type="ECO:0000256" key="6">
    <source>
        <dbReference type="SAM" id="MobiDB-lite"/>
    </source>
</evidence>
<evidence type="ECO:0000269" key="7">
    <source>
    </source>
</evidence>
<evidence type="ECO:0000269" key="8">
    <source>
    </source>
</evidence>
<evidence type="ECO:0000269" key="9">
    <source>
    </source>
</evidence>
<evidence type="ECO:0000269" key="10">
    <source>
    </source>
</evidence>
<evidence type="ECO:0000269" key="11">
    <source>
    </source>
</evidence>
<evidence type="ECO:0000269" key="12">
    <source>
    </source>
</evidence>
<evidence type="ECO:0000269" key="13">
    <source>
    </source>
</evidence>
<evidence type="ECO:0000269" key="14">
    <source>
    </source>
</evidence>
<evidence type="ECO:0000269" key="15">
    <source>
    </source>
</evidence>
<evidence type="ECO:0000269" key="16">
    <source>
    </source>
</evidence>
<evidence type="ECO:0000269" key="17">
    <source>
    </source>
</evidence>
<evidence type="ECO:0000269" key="18">
    <source>
    </source>
</evidence>
<evidence type="ECO:0000269" key="19">
    <source>
    </source>
</evidence>
<evidence type="ECO:0000269" key="20">
    <source>
    </source>
</evidence>
<evidence type="ECO:0000269" key="21">
    <source>
    </source>
</evidence>
<evidence type="ECO:0000269" key="22">
    <source>
    </source>
</evidence>
<evidence type="ECO:0000269" key="23">
    <source>
    </source>
</evidence>
<evidence type="ECO:0000269" key="24">
    <source>
    </source>
</evidence>
<evidence type="ECO:0000269" key="25">
    <source>
    </source>
</evidence>
<evidence type="ECO:0000269" key="26">
    <source>
    </source>
</evidence>
<evidence type="ECO:0000269" key="27">
    <source>
    </source>
</evidence>
<evidence type="ECO:0000269" key="28">
    <source>
    </source>
</evidence>
<evidence type="ECO:0000269" key="29">
    <source>
    </source>
</evidence>
<evidence type="ECO:0000269" key="30">
    <source>
    </source>
</evidence>
<evidence type="ECO:0000269" key="31">
    <source>
    </source>
</evidence>
<evidence type="ECO:0000269" key="32">
    <source>
    </source>
</evidence>
<evidence type="ECO:0000269" key="33">
    <source>
    </source>
</evidence>
<evidence type="ECO:0000269" key="34">
    <source>
    </source>
</evidence>
<evidence type="ECO:0000269" key="35">
    <source>
    </source>
</evidence>
<evidence type="ECO:0000269" key="36">
    <source>
    </source>
</evidence>
<evidence type="ECO:0000269" key="37">
    <source>
    </source>
</evidence>
<evidence type="ECO:0000269" key="38">
    <source>
    </source>
</evidence>
<evidence type="ECO:0000269" key="39">
    <source>
    </source>
</evidence>
<evidence type="ECO:0000269" key="40">
    <source>
    </source>
</evidence>
<evidence type="ECO:0000303" key="41">
    <source>
    </source>
</evidence>
<evidence type="ECO:0000303" key="42">
    <source ref="6"/>
</evidence>
<evidence type="ECO:0000305" key="43"/>
<evidence type="ECO:0007744" key="44">
    <source>
    </source>
</evidence>
<evidence type="ECO:0007744" key="45">
    <source>
    </source>
</evidence>
<evidence type="ECO:0007744" key="46">
    <source>
    </source>
</evidence>
<evidence type="ECO:0007744" key="47">
    <source>
    </source>
</evidence>
<evidence type="ECO:0007744" key="48">
    <source>
    </source>
</evidence>
<evidence type="ECO:0007829" key="49">
    <source>
        <dbReference type="PDB" id="8AFO"/>
    </source>
</evidence>
<evidence type="ECO:0007829" key="50">
    <source>
        <dbReference type="PDB" id="8AFP"/>
    </source>
</evidence>
<dbReference type="EMBL" id="X59847">
    <property type="protein sequence ID" value="CAA42508.1"/>
    <property type="molecule type" value="mRNA"/>
</dbReference>
<dbReference type="EMBL" id="M77640">
    <property type="protein sequence ID" value="AAC14352.1"/>
    <property type="molecule type" value="mRNA"/>
</dbReference>
<dbReference type="EMBL" id="M74387">
    <property type="protein sequence ID" value="AAA59476.1"/>
    <property type="molecule type" value="mRNA"/>
</dbReference>
<dbReference type="EMBL" id="U52111">
    <property type="status" value="NOT_ANNOTATED_CDS"/>
    <property type="molecule type" value="Genomic_DNA"/>
</dbReference>
<dbReference type="EMBL" id="Z29373">
    <property type="protein sequence ID" value="CAA82564.1"/>
    <property type="molecule type" value="Genomic_DNA"/>
</dbReference>
<dbReference type="EMBL" id="EF506611">
    <property type="protein sequence ID" value="ABP88252.1"/>
    <property type="molecule type" value="mRNA"/>
</dbReference>
<dbReference type="EMBL" id="U52112">
    <property type="status" value="NOT_ANNOTATED_CDS"/>
    <property type="molecule type" value="Genomic_DNA"/>
</dbReference>
<dbReference type="EMBL" id="CH471172">
    <property type="protein sequence ID" value="EAW72787.1"/>
    <property type="molecule type" value="Genomic_DNA"/>
</dbReference>
<dbReference type="EMBL" id="BC025843">
    <property type="protein sequence ID" value="AAH25843.1"/>
    <property type="molecule type" value="mRNA"/>
</dbReference>
<dbReference type="EMBL" id="BC126229">
    <property type="protein sequence ID" value="AAI26230.1"/>
    <property type="molecule type" value="mRNA"/>
</dbReference>
<dbReference type="EMBL" id="BC136447">
    <property type="protein sequence ID" value="AAI36448.1"/>
    <property type="molecule type" value="mRNA"/>
</dbReference>
<dbReference type="EMBL" id="M55271">
    <property type="protein sequence ID" value="AAA36353.1"/>
    <property type="status" value="ALT_SEQ"/>
    <property type="molecule type" value="mRNA"/>
</dbReference>
<dbReference type="EMBL" id="X58775">
    <property type="protein sequence ID" value="CAA41576.1"/>
    <property type="molecule type" value="Genomic_DNA"/>
</dbReference>
<dbReference type="EMBL" id="X58776">
    <property type="protein sequence ID" value="CAB37831.1"/>
    <property type="molecule type" value="mRNA"/>
</dbReference>
<dbReference type="CCDS" id="CCDS14733.1">
    <molecule id="P32004-1"/>
</dbReference>
<dbReference type="CCDS" id="CCDS14734.1">
    <molecule id="P32004-2"/>
</dbReference>
<dbReference type="CCDS" id="CCDS48192.1">
    <molecule id="P32004-3"/>
</dbReference>
<dbReference type="PIR" id="A41060">
    <property type="entry name" value="A41060"/>
</dbReference>
<dbReference type="RefSeq" id="NP_000416.1">
    <molecule id="P32004-1"/>
    <property type="nucleotide sequence ID" value="NM_000425.5"/>
</dbReference>
<dbReference type="RefSeq" id="NP_001137435.1">
    <molecule id="P32004-3"/>
    <property type="nucleotide sequence ID" value="NM_001143963.2"/>
</dbReference>
<dbReference type="RefSeq" id="NP_001265045.1">
    <molecule id="P32004-1"/>
    <property type="nucleotide sequence ID" value="NM_001278116.2"/>
</dbReference>
<dbReference type="RefSeq" id="NP_076493.1">
    <molecule id="P32004-2"/>
    <property type="nucleotide sequence ID" value="NM_024003.3"/>
</dbReference>
<dbReference type="PDB" id="8AFO">
    <property type="method" value="X-ray"/>
    <property type="resolution" value="1.99 A"/>
    <property type="chains" value="A=712-917"/>
</dbReference>
<dbReference type="PDB" id="8AFP">
    <property type="method" value="X-ray"/>
    <property type="resolution" value="3.00 A"/>
    <property type="chains" value="A=712-917"/>
</dbReference>
<dbReference type="PDBsum" id="8AFO"/>
<dbReference type="PDBsum" id="8AFP"/>
<dbReference type="SASBDB" id="P32004"/>
<dbReference type="SMR" id="P32004"/>
<dbReference type="BioGRID" id="110094">
    <property type="interactions" value="61"/>
</dbReference>
<dbReference type="CORUM" id="P32004"/>
<dbReference type="ELM" id="P32004"/>
<dbReference type="FunCoup" id="P32004">
    <property type="interactions" value="534"/>
</dbReference>
<dbReference type="IntAct" id="P32004">
    <property type="interactions" value="25"/>
</dbReference>
<dbReference type="MINT" id="P32004"/>
<dbReference type="STRING" id="9606.ENSP00000359077"/>
<dbReference type="BindingDB" id="P32004"/>
<dbReference type="ChEMBL" id="CHEMBL5169129"/>
<dbReference type="DrugBank" id="DB00898">
    <property type="generic name" value="Ethanol"/>
</dbReference>
<dbReference type="TCDB" id="8.A.23.1.62">
    <property type="family name" value="the basigin (basigin) family"/>
</dbReference>
<dbReference type="GlyConnect" id="1547">
    <property type="glycosylation" value="18 N-Linked glycans (4 sites)"/>
</dbReference>
<dbReference type="GlyCosmos" id="P32004">
    <property type="glycosylation" value="21 sites, 21 glycans"/>
</dbReference>
<dbReference type="GlyGen" id="P32004">
    <property type="glycosylation" value="23 sites, 57 N-linked glycans (16 sites), 1 O-linked glycan (1 site)"/>
</dbReference>
<dbReference type="iPTMnet" id="P32004"/>
<dbReference type="PhosphoSitePlus" id="P32004"/>
<dbReference type="SwissPalm" id="P32004"/>
<dbReference type="BioMuta" id="L1CAM"/>
<dbReference type="DMDM" id="1705571"/>
<dbReference type="jPOST" id="P32004"/>
<dbReference type="MassIVE" id="P32004"/>
<dbReference type="PaxDb" id="9606-ENSP00000359077"/>
<dbReference type="PeptideAtlas" id="P32004"/>
<dbReference type="ProteomicsDB" id="33733"/>
<dbReference type="ProteomicsDB" id="54830">
    <molecule id="P32004-1"/>
</dbReference>
<dbReference type="ProteomicsDB" id="54831">
    <molecule id="P32004-2"/>
</dbReference>
<dbReference type="Pumba" id="P32004"/>
<dbReference type="ABCD" id="P32004">
    <property type="antibodies" value="16 sequenced antibodies"/>
</dbReference>
<dbReference type="Antibodypedia" id="449">
    <property type="antibodies" value="1304 antibodies from 46 providers"/>
</dbReference>
<dbReference type="DNASU" id="3897"/>
<dbReference type="Ensembl" id="ENST00000361699.8">
    <molecule id="P32004-2"/>
    <property type="protein sequence ID" value="ENSP00000355380.4"/>
    <property type="gene ID" value="ENSG00000198910.14"/>
</dbReference>
<dbReference type="Ensembl" id="ENST00000361981.7">
    <molecule id="P32004-3"/>
    <property type="protein sequence ID" value="ENSP00000354712.3"/>
    <property type="gene ID" value="ENSG00000198910.14"/>
</dbReference>
<dbReference type="Ensembl" id="ENST00000370055.5">
    <molecule id="P32004-3"/>
    <property type="protein sequence ID" value="ENSP00000359072.1"/>
    <property type="gene ID" value="ENSG00000198910.14"/>
</dbReference>
<dbReference type="Ensembl" id="ENST00000370060.7">
    <molecule id="P32004-1"/>
    <property type="protein sequence ID" value="ENSP00000359077.1"/>
    <property type="gene ID" value="ENSG00000198910.14"/>
</dbReference>
<dbReference type="GeneID" id="3897"/>
<dbReference type="KEGG" id="hsa:3897"/>
<dbReference type="MANE-Select" id="ENST00000370060.7">
    <property type="protein sequence ID" value="ENSP00000359077.1"/>
    <property type="RefSeq nucleotide sequence ID" value="NM_001278116.2"/>
    <property type="RefSeq protein sequence ID" value="NP_001265045.1"/>
</dbReference>
<dbReference type="UCSC" id="uc004fjc.5">
    <molecule id="P32004-1"/>
    <property type="organism name" value="human"/>
</dbReference>
<dbReference type="AGR" id="HGNC:6470"/>
<dbReference type="CTD" id="3897"/>
<dbReference type="DisGeNET" id="3897"/>
<dbReference type="GeneCards" id="L1CAM"/>
<dbReference type="GeneReviews" id="L1CAM"/>
<dbReference type="HGNC" id="HGNC:6470">
    <property type="gene designation" value="L1CAM"/>
</dbReference>
<dbReference type="HPA" id="ENSG00000198910">
    <property type="expression patterns" value="Tissue enhanced (brain, intestine)"/>
</dbReference>
<dbReference type="MalaCards" id="L1CAM"/>
<dbReference type="MIM" id="303350">
    <property type="type" value="phenotype"/>
</dbReference>
<dbReference type="MIM" id="304100">
    <property type="type" value="phenotype"/>
</dbReference>
<dbReference type="MIM" id="307000">
    <property type="type" value="phenotype"/>
</dbReference>
<dbReference type="MIM" id="308840">
    <property type="type" value="gene"/>
</dbReference>
<dbReference type="neXtProt" id="NX_P32004"/>
<dbReference type="OpenTargets" id="ENSG00000198910"/>
<dbReference type="Orphanet" id="2182">
    <property type="disease" value="Hydrocephalus with stenosis of the aqueduct of Sylvius"/>
</dbReference>
<dbReference type="Orphanet" id="2466">
    <property type="disease" value="MASA syndrome"/>
</dbReference>
<dbReference type="Orphanet" id="1497">
    <property type="disease" value="X-linked complicated corpus callosum dysgenesis"/>
</dbReference>
<dbReference type="Orphanet" id="306617">
    <property type="disease" value="X-linked complicated spastic paraplegia type 1"/>
</dbReference>
<dbReference type="PharmGKB" id="PA30259"/>
<dbReference type="VEuPathDB" id="HostDB:ENSG00000198910"/>
<dbReference type="eggNOG" id="KOG3513">
    <property type="taxonomic scope" value="Eukaryota"/>
</dbReference>
<dbReference type="GeneTree" id="ENSGT00940000157506"/>
<dbReference type="HOGENOM" id="CLU_005756_1_1_1"/>
<dbReference type="InParanoid" id="P32004"/>
<dbReference type="OMA" id="GARTIIQ"/>
<dbReference type="OrthoDB" id="6244967at2759"/>
<dbReference type="PAN-GO" id="P32004">
    <property type="GO annotations" value="6 GO annotations based on evolutionary models"/>
</dbReference>
<dbReference type="PhylomeDB" id="P32004"/>
<dbReference type="TreeFam" id="TF351098"/>
<dbReference type="PathwayCommons" id="P32004"/>
<dbReference type="Reactome" id="R-HSA-210991">
    <property type="pathway name" value="Basigin interactions"/>
</dbReference>
<dbReference type="Reactome" id="R-HSA-373760">
    <property type="pathway name" value="L1CAM interactions"/>
</dbReference>
<dbReference type="Reactome" id="R-HSA-437239">
    <property type="pathway name" value="Recycling pathway of L1"/>
</dbReference>
<dbReference type="Reactome" id="R-HSA-445095">
    <property type="pathway name" value="Interaction between L1 and Ankyrins"/>
</dbReference>
<dbReference type="Reactome" id="R-HSA-445144">
    <property type="pathway name" value="Signal transduction by L1"/>
</dbReference>
<dbReference type="SignaLink" id="P32004"/>
<dbReference type="SIGNOR" id="P32004"/>
<dbReference type="BioGRID-ORCS" id="3897">
    <property type="hits" value="8 hits in 771 CRISPR screens"/>
</dbReference>
<dbReference type="CD-CODE" id="FB4E32DD">
    <property type="entry name" value="Presynaptic clusters and postsynaptic densities"/>
</dbReference>
<dbReference type="ChiTaRS" id="L1CAM">
    <property type="organism name" value="human"/>
</dbReference>
<dbReference type="GeneWiki" id="L1_(protein)"/>
<dbReference type="GenomeRNAi" id="3897"/>
<dbReference type="Pharos" id="P32004">
    <property type="development level" value="Tbio"/>
</dbReference>
<dbReference type="PRO" id="PR:P32004"/>
<dbReference type="Proteomes" id="UP000005640">
    <property type="component" value="Chromosome X"/>
</dbReference>
<dbReference type="RNAct" id="P32004">
    <property type="molecule type" value="protein"/>
</dbReference>
<dbReference type="Bgee" id="ENSG00000198910">
    <property type="expression patterns" value="Expressed in cortical plate and 162 other cell types or tissues"/>
</dbReference>
<dbReference type="ExpressionAtlas" id="P32004">
    <property type="expression patterns" value="baseline and differential"/>
</dbReference>
<dbReference type="GO" id="GO:0030424">
    <property type="term" value="C:axon"/>
    <property type="evidence" value="ECO:0000314"/>
    <property type="project" value="UniProtKB"/>
</dbReference>
<dbReference type="GO" id="GO:0044295">
    <property type="term" value="C:axonal growth cone"/>
    <property type="evidence" value="ECO:0000250"/>
    <property type="project" value="UniProtKB"/>
</dbReference>
<dbReference type="GO" id="GO:0009986">
    <property type="term" value="C:cell surface"/>
    <property type="evidence" value="ECO:0000314"/>
    <property type="project" value="UniProtKB"/>
</dbReference>
<dbReference type="GO" id="GO:0062023">
    <property type="term" value="C:collagen-containing extracellular matrix"/>
    <property type="evidence" value="ECO:0007005"/>
    <property type="project" value="BHF-UCL"/>
</dbReference>
<dbReference type="GO" id="GO:0030425">
    <property type="term" value="C:dendrite"/>
    <property type="evidence" value="ECO:0007669"/>
    <property type="project" value="UniProtKB-SubCell"/>
</dbReference>
<dbReference type="GO" id="GO:0005925">
    <property type="term" value="C:focal adhesion"/>
    <property type="evidence" value="ECO:0007005"/>
    <property type="project" value="UniProtKB"/>
</dbReference>
<dbReference type="GO" id="GO:0043025">
    <property type="term" value="C:neuronal cell body"/>
    <property type="evidence" value="ECO:0000314"/>
    <property type="project" value="UniProtKB"/>
</dbReference>
<dbReference type="GO" id="GO:0005886">
    <property type="term" value="C:plasma membrane"/>
    <property type="evidence" value="ECO:0000314"/>
    <property type="project" value="UniProtKB"/>
</dbReference>
<dbReference type="GO" id="GO:0008046">
    <property type="term" value="F:axon guidance receptor activity"/>
    <property type="evidence" value="ECO:0000318"/>
    <property type="project" value="GO_Central"/>
</dbReference>
<dbReference type="GO" id="GO:0019904">
    <property type="term" value="F:protein domain specific binding"/>
    <property type="evidence" value="ECO:0000314"/>
    <property type="project" value="CAFA"/>
</dbReference>
<dbReference type="GO" id="GO:0061564">
    <property type="term" value="P:axon development"/>
    <property type="evidence" value="ECO:0000314"/>
    <property type="project" value="UniProtKB"/>
</dbReference>
<dbReference type="GO" id="GO:0007411">
    <property type="term" value="P:axon guidance"/>
    <property type="evidence" value="ECO:0000314"/>
    <property type="project" value="UniProtKB"/>
</dbReference>
<dbReference type="GO" id="GO:0007155">
    <property type="term" value="P:cell adhesion"/>
    <property type="evidence" value="ECO:0000303"/>
    <property type="project" value="ProtInc"/>
</dbReference>
<dbReference type="GO" id="GO:0016477">
    <property type="term" value="P:cell migration"/>
    <property type="evidence" value="ECO:0000314"/>
    <property type="project" value="UniProtKB"/>
</dbReference>
<dbReference type="GO" id="GO:0007160">
    <property type="term" value="P:cell-matrix adhesion"/>
    <property type="evidence" value="ECO:0000314"/>
    <property type="project" value="UniProtKB"/>
</dbReference>
<dbReference type="GO" id="GO:0006935">
    <property type="term" value="P:chemotaxis"/>
    <property type="evidence" value="ECO:0000304"/>
    <property type="project" value="BHF-UCL"/>
</dbReference>
<dbReference type="GO" id="GO:0007156">
    <property type="term" value="P:homophilic cell adhesion via plasma membrane adhesion molecules"/>
    <property type="evidence" value="ECO:0000318"/>
    <property type="project" value="GO_Central"/>
</dbReference>
<dbReference type="GO" id="GO:0007399">
    <property type="term" value="P:nervous system development"/>
    <property type="evidence" value="ECO:0000304"/>
    <property type="project" value="ProtInc"/>
</dbReference>
<dbReference type="GO" id="GO:0031175">
    <property type="term" value="P:neuron projection development"/>
    <property type="evidence" value="ECO:0000314"/>
    <property type="project" value="UniProtKB"/>
</dbReference>
<dbReference type="GO" id="GO:0045773">
    <property type="term" value="P:positive regulation of axon extension"/>
    <property type="evidence" value="ECO:0000250"/>
    <property type="project" value="UniProtKB"/>
</dbReference>
<dbReference type="GO" id="GO:0050808">
    <property type="term" value="P:synapse organization"/>
    <property type="evidence" value="ECO:0000314"/>
    <property type="project" value="UniProtKB"/>
</dbReference>
<dbReference type="CDD" id="cd00063">
    <property type="entry name" value="FN3"/>
    <property type="match status" value="4"/>
</dbReference>
<dbReference type="CDD" id="cd05876">
    <property type="entry name" value="Ig3_L1-CAM"/>
    <property type="match status" value="1"/>
</dbReference>
<dbReference type="CDD" id="cd05867">
    <property type="entry name" value="Ig4_L1-CAM_like"/>
    <property type="match status" value="1"/>
</dbReference>
<dbReference type="CDD" id="cd05845">
    <property type="entry name" value="IgI_2_L1-CAM_like"/>
    <property type="match status" value="1"/>
</dbReference>
<dbReference type="DisProt" id="DP00666"/>
<dbReference type="FunFam" id="2.60.40.10:FF:000561">
    <property type="entry name" value="Neural cell adhesion molecule L1"/>
    <property type="match status" value="1"/>
</dbReference>
<dbReference type="FunFam" id="2.60.40.10:FF:000658">
    <property type="entry name" value="Neural cell adhesion molecule L1"/>
    <property type="match status" value="1"/>
</dbReference>
<dbReference type="FunFam" id="2.60.40.10:FF:000713">
    <property type="entry name" value="Neural cell adhesion molecule L1"/>
    <property type="match status" value="1"/>
</dbReference>
<dbReference type="FunFam" id="2.60.40.10:FF:000945">
    <property type="entry name" value="Neural cell adhesion molecule L1"/>
    <property type="match status" value="1"/>
</dbReference>
<dbReference type="FunFam" id="2.60.40.10:FF:000057">
    <property type="entry name" value="neural cell adhesion molecule L1"/>
    <property type="match status" value="1"/>
</dbReference>
<dbReference type="FunFam" id="2.60.40.10:FF:000063">
    <property type="entry name" value="neural cell adhesion molecule L1"/>
    <property type="match status" value="1"/>
</dbReference>
<dbReference type="FunFam" id="2.60.40.10:FF:000005">
    <property type="entry name" value="Neuronal cell adhesion molecule"/>
    <property type="match status" value="1"/>
</dbReference>
<dbReference type="FunFam" id="2.60.40.10:FF:000028">
    <property type="entry name" value="Neuronal cell adhesion molecule"/>
    <property type="match status" value="1"/>
</dbReference>
<dbReference type="FunFam" id="2.60.40.10:FF:000038">
    <property type="entry name" value="Neuronal cell adhesion molecule"/>
    <property type="match status" value="1"/>
</dbReference>
<dbReference type="FunFam" id="2.60.40.10:FF:000100">
    <property type="entry name" value="Neuronal cell adhesion molecule a"/>
    <property type="match status" value="1"/>
</dbReference>
<dbReference type="Gene3D" id="2.60.40.10">
    <property type="entry name" value="Immunoglobulins"/>
    <property type="match status" value="10"/>
</dbReference>
<dbReference type="InterPro" id="IPR003961">
    <property type="entry name" value="FN3_dom"/>
</dbReference>
<dbReference type="InterPro" id="IPR036116">
    <property type="entry name" value="FN3_sf"/>
</dbReference>
<dbReference type="InterPro" id="IPR007110">
    <property type="entry name" value="Ig-like_dom"/>
</dbReference>
<dbReference type="InterPro" id="IPR036179">
    <property type="entry name" value="Ig-like_dom_sf"/>
</dbReference>
<dbReference type="InterPro" id="IPR013783">
    <property type="entry name" value="Ig-like_fold"/>
</dbReference>
<dbReference type="InterPro" id="IPR013098">
    <property type="entry name" value="Ig_I-set"/>
</dbReference>
<dbReference type="InterPro" id="IPR003599">
    <property type="entry name" value="Ig_sub"/>
</dbReference>
<dbReference type="InterPro" id="IPR003598">
    <property type="entry name" value="Ig_sub2"/>
</dbReference>
<dbReference type="InterPro" id="IPR051170">
    <property type="entry name" value="Neural/epithelial_adhesion"/>
</dbReference>
<dbReference type="InterPro" id="IPR026966">
    <property type="entry name" value="Neurofascin/L1/NrCAM_C"/>
</dbReference>
<dbReference type="PANTHER" id="PTHR12231">
    <property type="entry name" value="CTX-RELATED TYPE I TRANSMEMBRANE PROTEIN"/>
    <property type="match status" value="1"/>
</dbReference>
<dbReference type="PANTHER" id="PTHR12231:SF241">
    <property type="entry name" value="L1 CELL ADHESION MOLECULE"/>
    <property type="match status" value="1"/>
</dbReference>
<dbReference type="Pfam" id="PF13882">
    <property type="entry name" value="Bravo_FIGEY"/>
    <property type="match status" value="1"/>
</dbReference>
<dbReference type="Pfam" id="PF00041">
    <property type="entry name" value="fn3"/>
    <property type="match status" value="4"/>
</dbReference>
<dbReference type="Pfam" id="PF07679">
    <property type="entry name" value="I-set"/>
    <property type="match status" value="3"/>
</dbReference>
<dbReference type="Pfam" id="PF13927">
    <property type="entry name" value="Ig_3"/>
    <property type="match status" value="2"/>
</dbReference>
<dbReference type="SMART" id="SM00060">
    <property type="entry name" value="FN3"/>
    <property type="match status" value="4"/>
</dbReference>
<dbReference type="SMART" id="SM00409">
    <property type="entry name" value="IG"/>
    <property type="match status" value="6"/>
</dbReference>
<dbReference type="SMART" id="SM00408">
    <property type="entry name" value="IGc2"/>
    <property type="match status" value="5"/>
</dbReference>
<dbReference type="SUPFAM" id="SSF49265">
    <property type="entry name" value="Fibronectin type III"/>
    <property type="match status" value="2"/>
</dbReference>
<dbReference type="SUPFAM" id="SSF48726">
    <property type="entry name" value="Immunoglobulin"/>
    <property type="match status" value="6"/>
</dbReference>
<dbReference type="PROSITE" id="PS50853">
    <property type="entry name" value="FN3"/>
    <property type="match status" value="5"/>
</dbReference>
<dbReference type="PROSITE" id="PS50835">
    <property type="entry name" value="IG_LIKE"/>
    <property type="match status" value="6"/>
</dbReference>
<protein>
    <recommendedName>
        <fullName>Neural cell adhesion molecule L1</fullName>
        <shortName>N-CAM-L1</shortName>
        <shortName>NCAM-L1</shortName>
    </recommendedName>
    <cdAntigenName>CD171</cdAntigenName>
</protein>
<gene>
    <name type="primary">L1CAM</name>
    <name type="synonym">CAML1</name>
    <name type="synonym">MIC5</name>
</gene>
<feature type="signal peptide" evidence="23">
    <location>
        <begin position="1"/>
        <end position="19"/>
    </location>
</feature>
<feature type="chain" id="PRO_0000015022" description="Neural cell adhesion molecule L1">
    <location>
        <begin position="20"/>
        <end position="1257"/>
    </location>
</feature>
<feature type="topological domain" description="Extracellular" evidence="3">
    <location>
        <begin position="20"/>
        <end position="1120"/>
    </location>
</feature>
<feature type="transmembrane region" description="Helical" evidence="3">
    <location>
        <begin position="1121"/>
        <end position="1143"/>
    </location>
</feature>
<feature type="topological domain" description="Cytoplasmic" evidence="3">
    <location>
        <begin position="1144"/>
        <end position="1257"/>
    </location>
</feature>
<feature type="domain" description="Ig-like C2-type 1">
    <location>
        <begin position="35"/>
        <end position="125"/>
    </location>
</feature>
<feature type="domain" description="Ig-like C2-type 2">
    <location>
        <begin position="139"/>
        <end position="226"/>
    </location>
</feature>
<feature type="domain" description="Ig-like C2-type 3">
    <location>
        <begin position="240"/>
        <end position="328"/>
    </location>
</feature>
<feature type="domain" description="Ig-like C2-type 4">
    <location>
        <begin position="333"/>
        <end position="420"/>
    </location>
</feature>
<feature type="domain" description="Ig-like C2-type 5">
    <location>
        <begin position="425"/>
        <end position="507"/>
    </location>
</feature>
<feature type="domain" description="Ig-like C2-type 6">
    <location>
        <begin position="518"/>
        <end position="607"/>
    </location>
</feature>
<feature type="domain" description="Fibronectin type-III 1" evidence="5">
    <location>
        <begin position="615"/>
        <end position="712"/>
    </location>
</feature>
<feature type="domain" description="Fibronectin type-III 2" evidence="5">
    <location>
        <begin position="717"/>
        <end position="810"/>
    </location>
</feature>
<feature type="domain" description="Fibronectin type-III 3" evidence="5">
    <location>
        <begin position="814"/>
        <end position="916"/>
    </location>
</feature>
<feature type="domain" description="Fibronectin type-III 4" evidence="5">
    <location>
        <begin position="920"/>
        <end position="1015"/>
    </location>
</feature>
<feature type="domain" description="Fibronectin type-III 5" evidence="5">
    <location>
        <begin position="1016"/>
        <end position="1115"/>
    </location>
</feature>
<feature type="region of interest" description="Disordered" evidence="6">
    <location>
        <begin position="698"/>
        <end position="725"/>
    </location>
</feature>
<feature type="region of interest" description="Disordered" evidence="6">
    <location>
        <begin position="1176"/>
        <end position="1207"/>
    </location>
</feature>
<feature type="region of interest" description="Disordered" evidence="6">
    <location>
        <begin position="1226"/>
        <end position="1257"/>
    </location>
</feature>
<feature type="short sequence motif" description="Cell attachment site" evidence="3">
    <location>
        <begin position="554"/>
        <end position="556"/>
    </location>
</feature>
<feature type="compositionally biased region" description="Basic and acidic residues" evidence="6">
    <location>
        <begin position="713"/>
        <end position="725"/>
    </location>
</feature>
<feature type="compositionally biased region" description="Basic and acidic residues" evidence="6">
    <location>
        <begin position="1176"/>
        <end position="1187"/>
    </location>
</feature>
<feature type="compositionally biased region" description="Polar residues" evidence="6">
    <location>
        <begin position="1241"/>
        <end position="1250"/>
    </location>
</feature>
<feature type="modified residue" description="Phosphoserine" evidence="44">
    <location>
        <position position="1163"/>
    </location>
</feature>
<feature type="modified residue" description="Phosphoserine" evidence="1">
    <location>
        <position position="1178"/>
    </location>
</feature>
<feature type="modified residue" description="Phosphoserine; by CaMK2" evidence="31">
    <location>
        <position position="1181"/>
    </location>
</feature>
<feature type="modified residue" description="Phosphoserine" evidence="46">
    <location>
        <position position="1194"/>
    </location>
</feature>
<feature type="modified residue" description="Phosphoserine" evidence="48">
    <location>
        <position position="1243"/>
    </location>
</feature>
<feature type="modified residue" description="Phosphoserine" evidence="1">
    <location>
        <position position="1244"/>
    </location>
</feature>
<feature type="modified residue" description="Phosphoserine" evidence="45">
    <location>
        <position position="1248"/>
    </location>
</feature>
<feature type="glycosylation site" description="N-linked (GlcNAc...) asparagine" evidence="3">
    <location>
        <position position="100"/>
    </location>
</feature>
<feature type="glycosylation site" description="N-linked (GlcNAc...) asparagine" evidence="3">
    <location>
        <position position="203"/>
    </location>
</feature>
<feature type="glycosylation site" description="N-linked (GlcNAc...) asparagine" evidence="3">
    <location>
        <position position="247"/>
    </location>
</feature>
<feature type="glycosylation site" description="N-linked (GlcNAc...) asparagine" evidence="3">
    <location>
        <position position="294"/>
    </location>
</feature>
<feature type="glycosylation site" description="N-linked (GlcNAc...) asparagine" evidence="3">
    <location>
        <position position="433"/>
    </location>
</feature>
<feature type="glycosylation site" description="N-linked (GlcNAc...) asparagine" evidence="3">
    <location>
        <position position="479"/>
    </location>
</feature>
<feature type="glycosylation site" description="N-linked (GlcNAc...) asparagine" evidence="3">
    <location>
        <position position="490"/>
    </location>
</feature>
<feature type="glycosylation site" description="N-linked (GlcNAc...) asparagine" evidence="3">
    <location>
        <position position="505"/>
    </location>
</feature>
<feature type="glycosylation site" description="N-linked (GlcNAc...) asparagine" evidence="3">
    <location>
        <position position="588"/>
    </location>
</feature>
<feature type="glycosylation site" description="N-linked (GlcNAc...) asparagine" evidence="12 15">
    <location>
        <position position="671"/>
    </location>
</feature>
<feature type="glycosylation site" description="N-linked (GlcNAc...) asparagine" evidence="3">
    <location>
        <position position="726"/>
    </location>
</feature>
<feature type="glycosylation site" description="N-linked (GlcNAc...) asparagine" evidence="3">
    <location>
        <position position="777"/>
    </location>
</feature>
<feature type="glycosylation site" description="N-linked (GlcNAc...) asparagine" evidence="3">
    <location>
        <position position="825"/>
    </location>
</feature>
<feature type="glycosylation site" description="N-linked (GlcNAc...) asparagine" evidence="3">
    <location>
        <position position="849"/>
    </location>
</feature>
<feature type="glycosylation site" description="N-linked (GlcNAc...) asparagine" evidence="3">
    <location>
        <position position="876"/>
    </location>
</feature>
<feature type="glycosylation site" description="N-linked (GlcNAc...) asparagine" evidence="3">
    <location>
        <position position="979"/>
    </location>
</feature>
<feature type="glycosylation site" description="N-linked (GlcNAc...) asparagine" evidence="3">
    <location>
        <position position="1022"/>
    </location>
</feature>
<feature type="glycosylation site" description="N-linked (GlcNAc...) asparagine" evidence="3">
    <location>
        <position position="1030"/>
    </location>
</feature>
<feature type="glycosylation site" description="N-linked (GlcNAc...) asparagine" evidence="3">
    <location>
        <position position="1071"/>
    </location>
</feature>
<feature type="glycosylation site" description="N-linked (GlcNAc...) asparagine" evidence="3">
    <location>
        <position position="1105"/>
    </location>
</feature>
<feature type="disulfide bond" evidence="4">
    <location>
        <begin position="57"/>
        <end position="114"/>
    </location>
</feature>
<feature type="disulfide bond" evidence="4">
    <location>
        <begin position="158"/>
        <end position="209"/>
    </location>
</feature>
<feature type="disulfide bond" evidence="4">
    <location>
        <begin position="264"/>
        <end position="312"/>
    </location>
</feature>
<feature type="disulfide bond" evidence="4">
    <location>
        <begin position="354"/>
        <end position="404"/>
    </location>
</feature>
<feature type="disulfide bond" evidence="4">
    <location>
        <begin position="448"/>
        <end position="497"/>
    </location>
</feature>
<feature type="disulfide bond" evidence="4">
    <location>
        <begin position="539"/>
        <end position="591"/>
    </location>
</feature>
<feature type="splice variant" id="VSP_046317" description="In isoform 3." evidence="42">
    <original>YEGHHV</original>
    <variation>L</variation>
    <location>
        <begin position="26"/>
        <end position="31"/>
    </location>
</feature>
<feature type="splice variant" id="VSP_002591" description="In isoform 2 and isoform 3." evidence="41 42">
    <location>
        <begin position="1177"/>
        <end position="1180"/>
    </location>
</feature>
<feature type="sequence variant" id="VAR_003921" description="In HYCX." evidence="25">
    <original>W</original>
    <variation>S</variation>
    <location>
        <position position="9"/>
    </location>
</feature>
<feature type="sequence variant" id="VAR_078350" description="Found in L1 syndrome; likely pathogenic." evidence="16">
    <location>
        <begin position="26"/>
        <end position="1257"/>
    </location>
</feature>
<feature type="sequence variant" id="VAR_030403" evidence="7">
    <original>H</original>
    <variation>N</variation>
    <location>
        <position position="30"/>
    </location>
</feature>
<feature type="sequence variant" id="VAR_078351" description="Found in L1 syndrome; likely pathogenic; loss of localization at the cell surface; retention in the endoplasmic reticulum; loss of homophilic interactions at the cell surface." evidence="16 22">
    <original>I</original>
    <variation>N</variation>
    <location>
        <position position="37"/>
    </location>
</feature>
<feature type="sequence variant" id="VAR_078352" description="No effect on localization at the cell surface; dbSNP:rs201151358." evidence="16 22">
    <original>T</original>
    <variation>M</variation>
    <location>
        <position position="38"/>
    </location>
</feature>
<feature type="sequence variant" id="VAR_078353" description="Found in L1 syndrome; likely pathogenic." evidence="16">
    <location>
        <begin position="66"/>
        <end position="1257"/>
    </location>
</feature>
<feature type="sequence variant" id="VAR_078354" description="Found in L1 syndrome; likely pathogenic." evidence="16">
    <location>
        <begin position="109"/>
        <end position="1257"/>
    </location>
</feature>
<feature type="sequence variant" id="VAR_078355" description="No effect on axon guidance activity, nor on synapse formation, when assayed in a heterologous system; dbSNP:rs796052697." evidence="21">
    <original>L</original>
    <variation>V</variation>
    <location>
        <position position="120"/>
    </location>
</feature>
<feature type="sequence variant" id="VAR_003922" description="In HYCX." evidence="25">
    <original>G</original>
    <variation>S</variation>
    <location>
        <position position="121"/>
    </location>
</feature>
<feature type="sequence variant" id="VAR_078356" description="Found in L1 syndrome; likely pathogenic." evidence="16">
    <location>
        <begin position="133"/>
        <end position="1257"/>
    </location>
</feature>
<feature type="sequence variant" id="VAR_078357" description="Found in L1 syndrome; likely pathogenic." evidence="16">
    <location>
        <begin position="138"/>
        <end position="1257"/>
    </location>
</feature>
<feature type="sequence variant" id="VAR_078358" description="Found in a patient with L1 syndrome; likely pathogenic; loss of homophilic interactions at the cell surface; no effect on the localization at the cell surface." evidence="16 22">
    <original>M</original>
    <variation>I</variation>
    <location>
        <position position="172"/>
    </location>
</feature>
<feature type="sequence variant" id="VAR_003923" description="In HYCX and MASA; dbSNP:rs137852523." evidence="16 24">
    <original>I</original>
    <variation>S</variation>
    <location>
        <position position="179"/>
    </location>
</feature>
<feature type="sequence variant" id="VAR_078359" description="Found in L1 syndrome; likely pathogenic." evidence="16">
    <original>R</original>
    <variation>G</variation>
    <location>
        <position position="184"/>
    </location>
</feature>
<feature type="sequence variant" id="VAR_003924" description="In HYCX; severe; reduced axon arborization; partial loss of localization at the cell surface; retention in the endoplasmic reticulum; in neurons, restricted to cell bodies and proximal segments of processes; loss of axon guidance and of proper synapse formation, when assayed in a heterologous system; dbSNP:rs137852521." evidence="16 17 21 27 30 34">
    <original>R</original>
    <variation>Q</variation>
    <location>
        <position position="184"/>
    </location>
</feature>
<feature type="sequence variant" id="VAR_030404" description="In HYCX." evidence="7">
    <original>R</original>
    <variation>W</variation>
    <location>
        <position position="184"/>
    </location>
</feature>
<feature type="sequence variant" id="VAR_078360" description="Found in L1 syndrome; likely pathogenic." evidence="16">
    <location>
        <begin position="187"/>
        <end position="198"/>
    </location>
</feature>
<feature type="sequence variant" id="VAR_003925" description="In HYCX." evidence="32">
    <original>Y</original>
    <variation>C</variation>
    <location>
        <position position="194"/>
    </location>
</feature>
<feature type="sequence variant" id="VAR_030405" description="In MASA; loss of homophilic interactions at the cell surface; no effect on localization at the cell surface." evidence="8 16 22">
    <original>D</original>
    <variation>Y</variation>
    <location>
        <position position="202"/>
    </location>
</feature>
<feature type="sequence variant" id="VAR_003926" description="In MASA; decrease in cell-matrix adhesion; decreased cell migration; loss of axon guidance and of proper synapse formation, when assayed in a heterologous system; no effect on the localization at the cell surface; no effect on cell proliferation, when transfected in pheochromocytoma PC12 cells; no effect on neurite outgrowth, when assayed in NGF-treated pheochromocytoma PC12 cells; dbSNP:rs28933683." evidence="20 21 27 28 30">
    <original>H</original>
    <variation>Q</variation>
    <location>
        <position position="210"/>
    </location>
</feature>
<feature type="sequence variant" id="VAR_003927" description="In HYCX; decrease in cell-matrix adhesion; decreased cell migration; no effect on the localization at the cell surface; no effect on cell proliferation, when transfected in pheochromocytoma PC12 cells; no effect on neurite outgrowth, when assayed in NGF-treated pheochromocytoma PC12 cells." evidence="20 39">
    <original>I</original>
    <variation>T</variation>
    <location>
        <position position="219"/>
    </location>
</feature>
<feature type="sequence variant" id="VAR_003928" description="In HYCX and ACCPX; dbSNP:rs137852526." evidence="13 32">
    <original>P</original>
    <variation>L</variation>
    <location>
        <position position="240"/>
    </location>
</feature>
<feature type="sequence variant" id="VAR_078361" description="Found in L1 syndrome; likely pathogenic." evidence="16">
    <original>A</original>
    <variation>D</variation>
    <location>
        <position position="254"/>
    </location>
</feature>
<feature type="sequence variant" id="VAR_003929" description="In HYCX; severe; loss of localization to the cell surface; retention in the endoplasmic reticulum; loss of axon guidance, when assayed in a heterologous system; dbSNP:rs137852518." evidence="11 20 21 29 30">
    <original>C</original>
    <variation>Y</variation>
    <location>
        <position position="264"/>
    </location>
</feature>
<feature type="sequence variant" id="VAR_030406" description="In MASA." evidence="36">
    <original>G</original>
    <variation>D</variation>
    <location>
        <position position="268"/>
    </location>
</feature>
<feature type="sequence variant" id="VAR_078362" description="Found in L1 syndrome; likely pathogenic; dbSNP:rs1131691900." evidence="16">
    <original>W</original>
    <variation>R</variation>
    <location>
        <position position="276"/>
    </location>
</feature>
<feature type="sequence variant" id="VAR_003930" description="In MASA; decrease in neurite outgrowth, when assayed in NGF-treated pheochromocytoma PC12 cells; decrease in cell-matrix adhesion; decreased cell migration; no effect on axon guidance, on subcellular location to synaptic terminals, nor on proper synapse formation, when assayed in a heterologous system; no effect on the localization at the cell surface; no effect on cell proliferation, when transfected in pheochromocytoma PC12 cells; dbSNP:rs367665974." evidence="20 21 25">
    <original>E</original>
    <variation>K</variation>
    <location>
        <position position="309"/>
    </location>
</feature>
<feature type="sequence variant" id="VAR_078363" description="Found in L1 syndrome; likely pathogenic." evidence="16">
    <original>L</original>
    <variation>P</variation>
    <location>
        <position position="313"/>
    </location>
</feature>
<feature type="sequence variant" id="VAR_030407" description="In HYCX." evidence="7">
    <original>W</original>
    <variation>C</variation>
    <location>
        <position position="335"/>
    </location>
</feature>
<feature type="sequence variant" id="VAR_003931" description="In HYCX and MASA; also in a patient with hydrocephalus and Hirschsprung disease." evidence="16 39">
    <original>W</original>
    <variation>R</variation>
    <location>
        <position position="335"/>
    </location>
</feature>
<feature type="sequence variant" id="VAR_078364" description="Found in L1 syndrome; likely pathogenic." evidence="16">
    <location>
        <begin position="366"/>
        <end position="1257"/>
    </location>
</feature>
<feature type="sequence variant" id="VAR_078365" description="Found in L1 syndrome; likely pathogenic." evidence="16">
    <original>N</original>
    <variation>K</variation>
    <location>
        <position position="369"/>
    </location>
</feature>
<feature type="sequence variant" id="VAR_003932" description="In HYCX and MASA; dbSNP:rs137852524." evidence="7 24">
    <original>G</original>
    <variation>R</variation>
    <location>
        <position position="370"/>
    </location>
</feature>
<feature type="sequence variant" id="VAR_003933" description="In HYCX; dbSNP:rs1557092299." evidence="39">
    <original>R</original>
    <variation>C</variation>
    <location>
        <position position="386"/>
    </location>
</feature>
<feature type="sequence variant" id="VAR_030408" description="In HYCX." evidence="7">
    <original>N</original>
    <variation>I</variation>
    <location>
        <position position="408"/>
    </location>
</feature>
<feature type="sequence variant" id="VAR_027512" description="In HYCX." evidence="10 16">
    <original>A</original>
    <variation>P</variation>
    <location>
        <position position="415"/>
    </location>
</feature>
<feature type="sequence variant" id="VAR_030409" description="In HYCX." evidence="7">
    <original>V</original>
    <variation>D</variation>
    <location>
        <position position="421"/>
    </location>
</feature>
<feature type="sequence variant" id="VAR_078366" description="Found in L1 syndrome; likely pathogenic." evidence="16">
    <location>
        <begin position="423"/>
        <end position="1257"/>
    </location>
</feature>
<feature type="sequence variant" id="VAR_030410" description="In MASA." evidence="36">
    <original>A</original>
    <variation>D</variation>
    <location>
        <position position="426"/>
    </location>
</feature>
<feature type="sequence variant" id="VAR_003934" description="In HYCX." evidence="34">
    <location>
        <begin position="439"/>
        <end position="443"/>
    </location>
</feature>
<feature type="sequence variant" id="VAR_003935" description="In HYCX; severe; dbSNP:rs137852520." evidence="27 30">
    <original>G</original>
    <variation>R</variation>
    <location>
        <position position="452"/>
    </location>
</feature>
<feature type="sequence variant" id="VAR_003936" description="In HYCX and MASA; dbSNP:rs886039408." evidence="39">
    <original>R</original>
    <variation>C</variation>
    <location>
        <position position="473"/>
    </location>
</feature>
<feature type="sequence variant" id="VAR_078367" description="Found in L1 syndrome; likely pathogenic." evidence="16">
    <original>G</original>
    <variation>R</variation>
    <location>
        <position position="480"/>
    </location>
</feature>
<feature type="sequence variant" id="VAR_030411" description="In MASA; dbSNP:rs1064794246." evidence="35">
    <original>L</original>
    <variation>P</variation>
    <location>
        <position position="482"/>
    </location>
</feature>
<feature type="sequence variant" id="VAR_030412" description="In HYCX." evidence="7">
    <original>C</original>
    <variation>Y</variation>
    <location>
        <position position="497"/>
    </location>
</feature>
<feature type="sequence variant" id="VAR_078368" description="Found in a patient with L1 syndrome; uncertain significance; dbSNP:rs782367931." evidence="16">
    <original>D</original>
    <variation>N</variation>
    <location>
        <position position="516"/>
    </location>
</feature>
<feature type="sequence variant" id="VAR_078369" description="Found in a patient with L1 syndrome; uncertain significance." evidence="16">
    <original>D</original>
    <variation>Y</variation>
    <location>
        <position position="516"/>
    </location>
</feature>
<feature type="sequence variant" id="VAR_078370" description="Found in a patient with L1 syndrome; uncertain significance; dbSNP:rs782401498." evidence="16">
    <original>R</original>
    <variation>H</variation>
    <location>
        <position position="525"/>
    </location>
</feature>
<feature type="sequence variant" id="VAR_030413" description="In HYCX." evidence="35">
    <location>
        <position position="526"/>
    </location>
</feature>
<feature type="sequence variant" id="VAR_030414" description="In HYCX." evidence="35">
    <original>S</original>
    <variation>P</variation>
    <location>
        <position position="542"/>
    </location>
</feature>
<feature type="sequence variant" id="VAR_003937" description="In MASA; dbSNP:rs137852519." evidence="28 30">
    <original>D</original>
    <variation>N</variation>
    <location>
        <position position="598"/>
    </location>
</feature>
<feature type="sequence variant" id="VAR_078371" description="In dbSNP:rs398123360." evidence="16">
    <original>T</original>
    <variation>M</variation>
    <location>
        <position position="627"/>
    </location>
</feature>
<feature type="sequence variant" id="VAR_003938" description="In MASA." evidence="37">
    <original>R</original>
    <variation>P</variation>
    <location>
        <position position="632"/>
    </location>
</feature>
<feature type="sequence variant" id="VAR_078372" description="Found in L1 syndrome; likely pathogenic; loss of localization at the cell surface; retention in the endoplasmic reticulum; loss of transport into axons; loss of neurite outgrowth; loss of cell-cell adhesion." evidence="18">
    <original>W</original>
    <variation>C</variation>
    <location>
        <position position="635"/>
    </location>
</feature>
<feature type="sequence variant" id="VAR_078373" description="Found in L1 syndrome; likely pathogenic; requires 2 nucleotide substitutions." evidence="16">
    <original>I</original>
    <variation>P</variation>
    <location>
        <position position="645"/>
    </location>
</feature>
<feature type="sequence variant" id="VAR_030415" description="In HYCX; dbSNP:rs1375788131." evidence="33">
    <original>K</original>
    <variation>E</variation>
    <location>
        <position position="655"/>
    </location>
</feature>
<feature type="sequence variant" id="VAR_078374" description="Found in L1 syndrome; likely pathogenic." evidence="16">
    <location>
        <begin position="662"/>
        <end position="1257"/>
    </location>
</feature>
<feature type="sequence variant" id="VAR_027513" description="In HYCX." evidence="40">
    <original>S</original>
    <variation>C</variation>
    <location>
        <position position="674"/>
    </location>
</feature>
<feature type="sequence variant" id="VAR_003939" description="In HYCX and MASA." evidence="38 40">
    <original>A</original>
    <variation>D</variation>
    <location>
        <position position="691"/>
    </location>
</feature>
<feature type="sequence variant" id="VAR_030416" description="In HYCX." evidence="7">
    <original>A</original>
    <variation>T</variation>
    <location>
        <position position="691"/>
    </location>
</feature>
<feature type="sequence variant" id="VAR_003940" description="In HYCX and MASA; also found in a patient affected by hydrocephalus with Hirschsprung disease; dbSNP:rs886039409." evidence="19 38 40">
    <original>G</original>
    <variation>R</variation>
    <location>
        <position position="698"/>
    </location>
</feature>
<feature type="sequence variant" id="VAR_078375" description="Found in L1 syndrome; likely pathogenic." evidence="16">
    <original>P</original>
    <variation>S</variation>
    <location>
        <position position="714"/>
    </location>
</feature>
<feature type="sequence variant" id="VAR_030417" description="In dbSNP:rs142424573." evidence="7">
    <original>R</original>
    <variation>W</variation>
    <location>
        <position position="739"/>
    </location>
</feature>
<feature type="sequence variant" id="VAR_030418" description="In HYCX; dbSNP:rs1557091083." evidence="35">
    <original>M</original>
    <variation>T</variation>
    <location>
        <position position="741"/>
    </location>
</feature>
<feature type="sequence variant" id="VAR_030419" description="In HYCX." evidence="7">
    <original>R</original>
    <variation>P</variation>
    <location>
        <position position="751"/>
    </location>
</feature>
<feature type="sequence variant" id="VAR_014421" description="In HYCX and MASA; also found in a patient with the diagnosis of L1 syndrome; also in a patient with hydrocephalus and Hirschsprung disease; dbSNP:rs137852525." evidence="9 16 35">
    <original>V</original>
    <variation>M</variation>
    <location>
        <position position="752"/>
    </location>
</feature>
<feature type="sequence variant" id="VAR_078376" description="Found in L1 syndrome; likely pathogenic; dbSNP:rs2148495173." evidence="16">
    <original>W</original>
    <variation>R</variation>
    <location>
        <position position="754"/>
    </location>
</feature>
<feature type="sequence variant" id="VAR_078377" description="Found in L1 syndrome; likely pathogenic." evidence="16">
    <location>
        <begin position="760"/>
        <end position="1257"/>
    </location>
</feature>
<feature type="sequence variant" id="VAR_003941" description="In HYCX." evidence="25">
    <original>V</original>
    <variation>F</variation>
    <location>
        <position position="768"/>
    </location>
</feature>
<feature type="sequence variant" id="VAR_030420" description="Decreased cell-cell adhesion; no effect on subcellular localization; no effect on neurite outgrowth; dbSNP:rs36021462." evidence="18 35">
    <original>V</original>
    <variation>I</variation>
    <location>
        <position position="768"/>
    </location>
</feature>
<feature type="sequence variant" id="VAR_027514" description="In MASA; dbSNP:rs148516831." evidence="14">
    <original>D</original>
    <variation>N</variation>
    <location>
        <position position="770"/>
    </location>
</feature>
<feature type="sequence variant" id="VAR_003942" description="In HYCX; dbSNP:rs797045674." evidence="34">
    <original>Y</original>
    <variation>C</variation>
    <location>
        <position position="784"/>
    </location>
</feature>
<feature type="sequence variant" id="VAR_078378" description="Found in L1 syndrome; likely pathogenic." evidence="16 22">
    <location>
        <begin position="789"/>
        <end position="1257"/>
    </location>
</feature>
<feature type="sequence variant" id="VAR_078379" description="Found in L1 syndrome; likely pathogenic." evidence="16">
    <location>
        <begin position="811"/>
        <end position="1257"/>
    </location>
</feature>
<feature type="sequence variant" id="VAR_078380" description="Found in L1 syndrome; likely pathogenic." evidence="16">
    <location>
        <begin position="891"/>
        <end position="1257"/>
    </location>
</feature>
<feature type="sequence variant" id="VAR_078381" description="Found in L1 syndrome; likely pathogenic." evidence="16">
    <location>
        <begin position="901"/>
        <end position="1257"/>
    </location>
</feature>
<feature type="sequence variant" id="VAR_003943" description="In HYCX." evidence="38">
    <original>L</original>
    <variation>P</variation>
    <location>
        <position position="935"/>
    </location>
</feature>
<feature type="sequence variant" id="VAR_003944" description="In HYCX." evidence="34">
    <location>
        <begin position="936"/>
        <end position="948"/>
    </location>
</feature>
<feature type="sequence variant" id="VAR_003945" description="In HYCX and MASA; decrease in neurite outgrowth, when assayed in NGF-treated pheochromocytoma PC12 cells; decrease in cell-matrix adhesion; decreased cell migration; no effect on the localization at the cell surface; no effect on cell proliferation, when transfected in pheochromocytoma PC12 cells; dbSNP:rs2148493879." evidence="20 25">
    <original>P</original>
    <variation>L</variation>
    <location>
        <position position="941"/>
    </location>
</feature>
<feature type="sequence variant" id="VAR_059413" description="In dbSNP:rs35902890.">
    <original>L</original>
    <variation>V</variation>
    <location>
        <position position="958"/>
    </location>
</feature>
<feature type="sequence variant" id="VAR_078382" description="In HYCX; partial loss of localization at the cell surface; retention in the endoplasmic reticulum; in neurons, partial loss of localization to axons, but enriched on proximal dendrites." evidence="17">
    <original>W</original>
    <variation>L</variation>
    <location>
        <position position="1036"/>
    </location>
</feature>
<feature type="sequence variant" id="VAR_078383" description="Found in L1 syndrome; likely pathogenic." evidence="16">
    <location>
        <begin position="1064"/>
        <end position="1257"/>
    </location>
</feature>
<feature type="sequence variant" id="VAR_003946" description="In HYCX; partial loss of axon guidance and loss of proper synapse formation, when assayed in a heterologous system." evidence="21 25">
    <original>Y</original>
    <variation>C</variation>
    <location>
        <position position="1070"/>
    </location>
</feature>
<feature type="sequence variant" id="VAR_078384" description="Found in L1 syndrome; likely pathogenic." evidence="16">
    <location>
        <position position="1071"/>
    </location>
</feature>
<feature type="sequence variant" id="VAR_078385" description="Found in L1 syndrome; likely pathogenic." evidence="16">
    <original>L</original>
    <variation>Q</variation>
    <location>
        <position position="1080"/>
    </location>
</feature>
<feature type="sequence variant" id="VAR_003947" description="In HYCX and MASA; dbSNP:rs137852522." evidence="26 30">
    <original>S</original>
    <variation>L</variation>
    <location>
        <position position="1194"/>
    </location>
</feature>
<feature type="sequence variant" id="VAR_003948" description="In HYCX; dbSNP:rs2148491960." evidence="39">
    <original>S</original>
    <variation>L</variation>
    <location>
        <position position="1224"/>
    </location>
</feature>
<feature type="sequence variant" id="VAR_030421" evidence="7">
    <original>G</original>
    <variation>E</variation>
    <location>
        <position position="1239"/>
    </location>
</feature>
<feature type="mutagenesis site" description="Loss of axon guidance, when assayed in a heterologous system, but normal synapse formation." evidence="21">
    <original>KGGKYSV</original>
    <variation>AGGAASA</variation>
    <location>
        <begin position="1147"/>
        <end position="1153"/>
    </location>
</feature>
<feature type="sequence conflict" description="In Ref. 1; CAA42508." evidence="43" ref="1">
    <original>A</original>
    <variation>V</variation>
    <location>
        <position position="4"/>
    </location>
</feature>
<feature type="sequence conflict" description="In Ref. 1; CAA42508." evidence="43" ref="1">
    <original>T</original>
    <variation>I</variation>
    <location>
        <position position="216"/>
    </location>
</feature>
<feature type="sequence conflict" description="In Ref. 1; CAA42508." evidence="43" ref="1">
    <original>S</original>
    <variation>T</variation>
    <location>
        <position position="250"/>
    </location>
</feature>
<feature type="sequence conflict" description="In Ref. 1; CAA42508." evidence="43" ref="1">
    <original>WL</original>
    <variation>SV</variation>
    <location>
        <begin position="276"/>
        <end position="277"/>
    </location>
</feature>
<feature type="sequence conflict" description="In Ref. 6; ABP88252." evidence="43" ref="6">
    <original>V</original>
    <variation>A</variation>
    <location>
        <position position="288"/>
    </location>
</feature>
<feature type="sequence conflict" description="In Ref. 1; CAA42508." evidence="43" ref="1">
    <original>Q</original>
    <variation>E</variation>
    <location>
        <position position="357"/>
    </location>
</feature>
<feature type="sequence conflict" description="In Ref. 6; ABP88252." evidence="43" ref="6">
    <original>K</original>
    <variation>T</variation>
    <location>
        <position position="515"/>
    </location>
</feature>
<feature type="sequence conflict" description="In Ref. 1; CAA42508." evidence="43" ref="1">
    <original>L</original>
    <variation>V</variation>
    <location>
        <position position="626"/>
    </location>
</feature>
<feature type="sequence conflict" description="In Ref. 6; ABP88252." evidence="43" ref="6">
    <original>E</original>
    <variation>G</variation>
    <location>
        <position position="660"/>
    </location>
</feature>
<feature type="sequence conflict" description="In Ref. 12; CAB37831." evidence="43" ref="12">
    <original>L</original>
    <variation>V</variation>
    <location>
        <position position="936"/>
    </location>
</feature>
<feature type="sequence conflict" description="In Ref. 13; no nucleotide entry." evidence="43" ref="13">
    <original>GF</original>
    <variation>WLC</variation>
    <location>
        <begin position="1116"/>
        <end position="1117"/>
    </location>
</feature>
<feature type="sequence conflict" description="In Ref. 6; ABP88252." evidence="43" ref="6">
    <original>E</original>
    <variation>V</variation>
    <location>
        <position position="1164"/>
    </location>
</feature>
<feature type="strand" evidence="49">
    <location>
        <begin position="722"/>
        <end position="724"/>
    </location>
</feature>
<feature type="strand" evidence="49">
    <location>
        <begin position="730"/>
        <end position="734"/>
    </location>
</feature>
<feature type="helix" evidence="49">
    <location>
        <begin position="740"/>
        <end position="742"/>
    </location>
</feature>
<feature type="strand" evidence="49">
    <location>
        <begin position="744"/>
        <end position="746"/>
    </location>
</feature>
<feature type="strand" evidence="49">
    <location>
        <begin position="749"/>
        <end position="756"/>
    </location>
</feature>
<feature type="turn" evidence="50">
    <location>
        <begin position="757"/>
        <end position="759"/>
    </location>
</feature>
<feature type="strand" evidence="49">
    <location>
        <begin position="764"/>
        <end position="777"/>
    </location>
</feature>
<feature type="strand" evidence="49">
    <location>
        <begin position="783"/>
        <end position="792"/>
    </location>
</feature>
<feature type="strand" evidence="49">
    <location>
        <begin position="803"/>
        <end position="806"/>
    </location>
</feature>
<feature type="strand" evidence="49">
    <location>
        <begin position="818"/>
        <end position="825"/>
    </location>
</feature>
<feature type="strand" evidence="49">
    <location>
        <begin position="828"/>
        <end position="833"/>
    </location>
</feature>
<feature type="helix" evidence="49">
    <location>
        <begin position="838"/>
        <end position="840"/>
    </location>
</feature>
<feature type="strand" evidence="49">
    <location>
        <begin position="847"/>
        <end position="856"/>
    </location>
</feature>
<feature type="strand" evidence="49">
    <location>
        <begin position="869"/>
        <end position="874"/>
    </location>
</feature>
<feature type="strand" evidence="49">
    <location>
        <begin position="879"/>
        <end position="882"/>
    </location>
</feature>
<feature type="strand" evidence="49">
    <location>
        <begin position="890"/>
        <end position="898"/>
    </location>
</feature>
<feature type="strand" evidence="49">
    <location>
        <begin position="907"/>
        <end position="912"/>
    </location>
</feature>
<feature type="modified residue" description="Phosphoserine" evidence="46 47">
    <location sequence="P32004-2">
        <position position="1177"/>
    </location>
</feature>
<feature type="modified residue" description="Phosphoserine" evidence="46 47">
    <location sequence="P32004-3">
        <position position="1172"/>
    </location>
</feature>
<sequence length="1257" mass="140003">MVVALRYVWPLLLCSPCLLIQIPEEYEGHHVMEPPVITEQSPRRLVVFPTDDISLKCEASGKPEVQFRWTRDGVHFKPKEELGVTVYQSPHSGSFTITGNNSNFAQRFQGIYRCFASNKLGTAMSHEIRLMAEGAPKWPKETVKPVEVEEGESVVLPCNPPPSAEPLRIYWMNSKILHIKQDERVTMGQNGNLYFANVLTSDNHSDYICHAHFPGTRTIIQKEPIDLRVKATNSMIDRKPRLLFPTNSSSHLVALQGQPLVLECIAEGFPTPTIKWLRPSGPMPADRVTYQNHNKTLQLLKVGEEDDGEYRCLAENSLGSARHAYYVTVEAAPYWLHKPQSHLYGPGETARLDCQVQGRPQPEVTWRINGIPVEELAKDQKYRIQRGALILSNVQPSDTMVTQCEARNRHGLLLANAYIYVVQLPAKILTADNQTYMAVQGSTAYLLCKAFGAPVPSVQWLDEDGTTVLQDERFFPYANGTLGIRDLQANDTGRYFCLAANDQNNVTIMANLKVKDATQITQGPRSTIEKKGSRVTFTCQASFDPSLQPSITWRGDGRDLQELGDSDKYFIEDGRLVIHSLDYSDQGNYSCVASTELDVVESRAQLLVVGSPGPVPRLVLSDLHLLTQSQVRVSWSPAEDHNAPIEKYDIEFEDKEMAPEKWYSLGKVPGNQTSTTLKLSPYVHYTFRVTAINKYGPGEPSPVSETVVTPEAAPEKNPVDVKGEGNETTNMVITWKPLRWMDWNAPQVQYRVQWRPQGTRGPWQEQIVSDPFLVVSNTSTFVPYEIKVQAVNSQGKGPEPQVTIGYSGEDYPQAIPELEGIEILNSSAVLVKWRPVDLAQVKGHLRGYNVTYWREGSQRKHSKRHIHKDHVVVPANTTSVILSGLRPYSSYHLEVQAFNGRGSGPASEFTFSTPEGVPGHPEALHLECQSNTSLLLRWQPPLSHNGVLTGYVLSYHPLDEGGKGQLSFNLRDPELRTHNLTDLSPHLRYRFQLQATTKEGPGEAIVREGGTMALSGISDFGNISATAGENYSVVSWVPKEGQCNFRFHILFKALGEEKGGASLSPQYVSYNQSSYTQWDLQPDTDYEIHLFKERMFRHQMAVKTNGTGRVRLPPAGFATEGWFIGFVSAIILLLLVLLILCFIKRSKGGKYSVKDKEDTQVDSEARPMKDETFGEYRSLESDNEEKAFGSSQPSLNGDIKPLGSDDSLADYGGSVDVQFNEDGSFIGQYSGKKEKEAAGGNDSSGATSPINPAVALE</sequence>
<accession>P32004</accession>
<accession>A0AV65</accession>
<accession>A4ZYW4</accession>
<accession>B2RMU7</accession>
<accession>G3XAF4</accession>
<accession>Q8TA87</accession>
<organism>
    <name type="scientific">Homo sapiens</name>
    <name type="common">Human</name>
    <dbReference type="NCBI Taxonomy" id="9606"/>
    <lineage>
        <taxon>Eukaryota</taxon>
        <taxon>Metazoa</taxon>
        <taxon>Chordata</taxon>
        <taxon>Craniata</taxon>
        <taxon>Vertebrata</taxon>
        <taxon>Euteleostomi</taxon>
        <taxon>Mammalia</taxon>
        <taxon>Eutheria</taxon>
        <taxon>Euarchontoglires</taxon>
        <taxon>Primates</taxon>
        <taxon>Haplorrhini</taxon>
        <taxon>Catarrhini</taxon>
        <taxon>Hominidae</taxon>
        <taxon>Homo</taxon>
    </lineage>
</organism>
<proteinExistence type="evidence at protein level"/>
<comment type="function">
    <text evidence="17 43">Neural cell adhesion molecule involved in the dynamics of cell adhesion and in the generation of transmembrane signals at tyrosine kinase receptors. During brain development, critical in multiple processes, including neuronal migration, axonal growth and fasciculation, and synaptogenesis. In the mature brain, plays a role in the dynamics of neuronal structure and function, including synaptic plasticity.</text>
</comment>
<comment type="subunit">
    <text evidence="1 2">Interacts with SHTN1; the interaction occurs in axonal growth cones (By similarity). Interacts with isoform 2 of BSG (By similarity).</text>
</comment>
<comment type="subcellular location">
    <subcellularLocation>
        <location evidence="11 17 20 22">Cell membrane</location>
        <topology evidence="2">Single-pass type I membrane protein</topology>
    </subcellularLocation>
    <subcellularLocation>
        <location evidence="2">Cell projection</location>
        <location evidence="2">Growth cone</location>
    </subcellularLocation>
    <subcellularLocation>
        <location evidence="17">Cell projection</location>
        <location evidence="17">Axon</location>
    </subcellularLocation>
    <subcellularLocation>
        <location>Cell projection</location>
        <location>Dendrite</location>
    </subcellularLocation>
    <text evidence="2 17">Colocalized with SHTN1 in close apposition with actin filaments in filopodia and lamellipodia of axonalne growth cones of hippocampal neurons (By similarity). In neurons, detected predominantly in axons and cell body, weak localization to dendrites (PubMed:20621658).</text>
</comment>
<comment type="alternative products">
    <event type="alternative splicing"/>
    <isoform>
        <id>P32004-1</id>
        <name>1</name>
        <sequence type="displayed"/>
    </isoform>
    <isoform>
        <id>P32004-2</id>
        <name>2</name>
        <sequence type="described" ref="VSP_002591"/>
    </isoform>
    <isoform>
        <id>P32004-3</id>
        <name>3</name>
        <sequence type="described" ref="VSP_046317 VSP_002591"/>
    </isoform>
</comment>
<comment type="disease" evidence="7 9 10 11 16 17 19 20 21 24 25 26 27 29 30 32 33 34 35 38 39 40">
    <disease id="DI-01759">
        <name>Hydrocephalus, congenital, X-linked</name>
        <acronym>HYCX</acronym>
        <description>An X-linked recessive form of congenital hydrocephalus, a disease characterized by in utero onset of enlarged ventricles due to accumulation of ventricular cerebrospinal fluid. HYCX is the most common inherited form and occurs in approximately 1/30000 male births. The primary diagnostic criteria of intellectual disability and enlarged cerebral ventricles are often accompanied by spastic paraparesis and adducted thumbs and, occasionally, visual defects or seizures. The most severe cases die pre- or perinatally with gross hydrocephalus and enlarged head circumference. Stenosis of the aqueduct of Sylvius is frequently associated with the disorder.</description>
        <dbReference type="MIM" id="307000"/>
    </disease>
    <text evidence="19">The disease is caused by variants affecting the gene represented in this entry. L1CAM mutations have also been found in few patients affected by hydrocephalus with Hirschsprung disease, suggesting a role of this gene acting either in a direct or indirect way in the pathogenesis of Hirschsprung disease (PubMed:22344793).</text>
</comment>
<comment type="disease" evidence="7 8 9 14 16 19 20 21 22 24 25 26 27 28 30 35 36 37 38 39 40">
    <disease id="DI-00707">
        <name>MASA syndrome</name>
        <acronym>MASA</acronym>
        <description>An X-linked recessive syndrome with a highly variable clinical spectrum. Main clinical features include spasticity and hyperreflexia of lower limbs, shuffling gait, intellectual disability, aphasia and adducted thumbs. The features of spasticity have been referred to as complicated spastic paraplegia type 1 (SPG1). Some patients manifest corpus callosum hypoplasia and hydrocephalus. Inter- and intrafamilial variability is very wide, such that patients with hydrocephalus, MASA, SPG1, and agenesis of corpus callosum can be present within the same family.</description>
        <dbReference type="MIM" id="303350"/>
    </disease>
    <text>The disease is caused by variants affecting the gene represented in this entry.</text>
</comment>
<comment type="disease">
    <text evidence="9">Defects in L1CAM may contribute to Hirschsprung disease by modifying the effects of Hirschsprung disease-associated genes to cause intestinal aganglionosis.</text>
</comment>
<comment type="disease" evidence="13">
    <disease id="DI-02143">
        <name>Agenesis of the corpus callosum, X-linked, partial</name>
        <acronym>ACCPX</acronym>
        <description>A syndrome characterized by partial corpus callosum agenesis, hypoplasia of inferior vermis and cerebellum, intellectual disability, seizures and spasticity. Other features include microcephaly, unusual facies, and Hirschsprung disease in some patients.</description>
        <dbReference type="MIM" id="304100"/>
    </disease>
    <text>The disease is caused by variants affecting the gene represented in this entry.</text>
</comment>
<comment type="disease">
    <text evidence="16 18 22">Defects in L1CAM are associated with a wide phenotypic spectrum which varies from severe hydrocephalus and prenatal death (HYCX) to a milder phenotype (MASA). These variations may even occur within the same family. Due to the overlap of phenotypes between HYCX and MASA, many authors use the general concept of L1 syndrome which covers both ends of the spectrum.</text>
</comment>
<comment type="similarity">
    <text evidence="43">Belongs to the immunoglobulin superfamily. L1/neurofascin/NgCAM family.</text>
</comment>
<comment type="online information" name="Atlas of Genetics and Cytogenetics in Oncology and Haematology">
    <link uri="https://atlasgeneticsoncology.org/gene/44110/L1CAM"/>
</comment>
<comment type="online information" name="L1CAM">
    <link uri="http://www.l1cammutationdatabase.info/"/>
    <text>L1CAM mutation Web Page</text>
</comment>
<keyword id="KW-0002">3D-structure</keyword>
<keyword id="KW-0025">Alternative splicing</keyword>
<keyword id="KW-0130">Cell adhesion</keyword>
<keyword id="KW-1003">Cell membrane</keyword>
<keyword id="KW-0966">Cell projection</keyword>
<keyword id="KW-0217">Developmental protein</keyword>
<keyword id="KW-0221">Differentiation</keyword>
<keyword id="KW-0903">Direct protein sequencing</keyword>
<keyword id="KW-0225">Disease variant</keyword>
<keyword id="KW-1015">Disulfide bond</keyword>
<keyword id="KW-0325">Glycoprotein</keyword>
<keyword id="KW-0890">Hereditary spastic paraplegia</keyword>
<keyword id="KW-0367">Hirschsprung disease</keyword>
<keyword id="KW-0393">Immunoglobulin domain</keyword>
<keyword id="KW-0991">Intellectual disability</keyword>
<keyword id="KW-0472">Membrane</keyword>
<keyword id="KW-0523">Neurodegeneration</keyword>
<keyword id="KW-0524">Neurogenesis</keyword>
<keyword id="KW-0597">Phosphoprotein</keyword>
<keyword id="KW-1267">Proteomics identification</keyword>
<keyword id="KW-1185">Reference proteome</keyword>
<keyword id="KW-0677">Repeat</keyword>
<keyword id="KW-0732">Signal</keyword>
<keyword id="KW-0812">Transmembrane</keyword>
<keyword id="KW-1133">Transmembrane helix</keyword>
<name>L1CAM_HUMAN</name>